<protein>
    <recommendedName>
        <fullName evidence="41">Glutamate receptor ionotropic, NMDA 2A</fullName>
        <shortName>GluN2A</shortName>
    </recommendedName>
    <alternativeName>
        <fullName>Glutamate [NMDA] receptor subunit epsilon-1</fullName>
    </alternativeName>
    <alternativeName>
        <fullName>N-methyl D-aspartate receptor subtype 2A</fullName>
        <shortName evidence="40">NMDAR2A</shortName>
        <shortName>NR2A</shortName>
        <shortName evidence="39">hNR2A</shortName>
    </alternativeName>
</protein>
<accession>Q12879</accession>
<accession>O00669</accession>
<accession>Q17RZ6</accession>
<gene>
    <name evidence="42" type="primary">GRIN2A</name>
    <name type="synonym">NMDAR2A</name>
</gene>
<evidence type="ECO:0000250" key="1"/>
<evidence type="ECO:0000250" key="2">
    <source>
        <dbReference type="UniProtKB" id="B7ZSK1"/>
    </source>
</evidence>
<evidence type="ECO:0000250" key="3">
    <source>
        <dbReference type="UniProtKB" id="P35436"/>
    </source>
</evidence>
<evidence type="ECO:0000250" key="4">
    <source>
        <dbReference type="UniProtKB" id="P35438"/>
    </source>
</evidence>
<evidence type="ECO:0000250" key="5">
    <source>
        <dbReference type="UniProtKB" id="Q00959"/>
    </source>
</evidence>
<evidence type="ECO:0000255" key="6"/>
<evidence type="ECO:0000256" key="7">
    <source>
        <dbReference type="SAM" id="MobiDB-lite"/>
    </source>
</evidence>
<evidence type="ECO:0000269" key="8">
    <source>
    </source>
</evidence>
<evidence type="ECO:0000269" key="9">
    <source>
    </source>
</evidence>
<evidence type="ECO:0000269" key="10">
    <source>
    </source>
</evidence>
<evidence type="ECO:0000269" key="11">
    <source>
    </source>
</evidence>
<evidence type="ECO:0000269" key="12">
    <source>
    </source>
</evidence>
<evidence type="ECO:0000269" key="13">
    <source>
    </source>
</evidence>
<evidence type="ECO:0000269" key="14">
    <source>
    </source>
</evidence>
<evidence type="ECO:0000269" key="15">
    <source>
    </source>
</evidence>
<evidence type="ECO:0000269" key="16">
    <source>
    </source>
</evidence>
<evidence type="ECO:0000269" key="17">
    <source>
    </source>
</evidence>
<evidence type="ECO:0000269" key="18">
    <source>
    </source>
</evidence>
<evidence type="ECO:0000269" key="19">
    <source>
    </source>
</evidence>
<evidence type="ECO:0000269" key="20">
    <source>
    </source>
</evidence>
<evidence type="ECO:0000269" key="21">
    <source>
    </source>
</evidence>
<evidence type="ECO:0000269" key="22">
    <source>
    </source>
</evidence>
<evidence type="ECO:0000269" key="23">
    <source>
    </source>
</evidence>
<evidence type="ECO:0000269" key="24">
    <source>
    </source>
</evidence>
<evidence type="ECO:0000269" key="25">
    <source>
    </source>
</evidence>
<evidence type="ECO:0000269" key="26">
    <source>
    </source>
</evidence>
<evidence type="ECO:0000269" key="27">
    <source>
    </source>
</evidence>
<evidence type="ECO:0000269" key="28">
    <source>
    </source>
</evidence>
<evidence type="ECO:0000269" key="29">
    <source>
    </source>
</evidence>
<evidence type="ECO:0000269" key="30">
    <source>
    </source>
</evidence>
<evidence type="ECO:0000269" key="31">
    <source>
    </source>
</evidence>
<evidence type="ECO:0000269" key="32">
    <source>
    </source>
</evidence>
<evidence type="ECO:0000269" key="33">
    <source>
    </source>
</evidence>
<evidence type="ECO:0000269" key="34">
    <source>
    </source>
</evidence>
<evidence type="ECO:0000269" key="35">
    <source>
    </source>
</evidence>
<evidence type="ECO:0000269" key="36">
    <source>
    </source>
</evidence>
<evidence type="ECO:0000269" key="37">
    <source>
    </source>
</evidence>
<evidence type="ECO:0000303" key="38">
    <source>
    </source>
</evidence>
<evidence type="ECO:0000303" key="39">
    <source>
    </source>
</evidence>
<evidence type="ECO:0000303" key="40">
    <source>
    </source>
</evidence>
<evidence type="ECO:0000305" key="41"/>
<evidence type="ECO:0000312" key="42">
    <source>
        <dbReference type="HGNC" id="HGNC:4585"/>
    </source>
</evidence>
<evidence type="ECO:0007744" key="43">
    <source>
        <dbReference type="PDB" id="5H8F"/>
    </source>
</evidence>
<evidence type="ECO:0007744" key="44">
    <source>
        <dbReference type="PDB" id="5H8H"/>
    </source>
</evidence>
<evidence type="ECO:0007744" key="45">
    <source>
        <dbReference type="PDB" id="5H8N"/>
    </source>
</evidence>
<evidence type="ECO:0007744" key="46">
    <source>
        <dbReference type="PDB" id="5H8Q"/>
    </source>
</evidence>
<evidence type="ECO:0007744" key="47">
    <source>
        <dbReference type="PDB" id="5I2K"/>
    </source>
</evidence>
<evidence type="ECO:0007744" key="48">
    <source>
        <dbReference type="PDB" id="5I2N"/>
    </source>
</evidence>
<evidence type="ECO:0007744" key="49">
    <source>
        <dbReference type="PDB" id="5KCJ"/>
    </source>
</evidence>
<evidence type="ECO:0007744" key="50">
    <source>
        <dbReference type="PDB" id="5KDT"/>
    </source>
</evidence>
<evidence type="ECO:0007744" key="51">
    <source>
        <dbReference type="PDB" id="5TP9"/>
    </source>
</evidence>
<evidence type="ECO:0007744" key="52">
    <source>
        <dbReference type="PDB" id="5TPA"/>
    </source>
</evidence>
<evidence type="ECO:0007744" key="53">
    <source>
        <dbReference type="PDB" id="7EOQ"/>
    </source>
</evidence>
<evidence type="ECO:0007744" key="54">
    <source>
        <dbReference type="PDB" id="7EOR"/>
    </source>
</evidence>
<evidence type="ECO:0007744" key="55">
    <source>
        <dbReference type="PDB" id="7EOS"/>
    </source>
</evidence>
<evidence type="ECO:0007744" key="56">
    <source>
        <dbReference type="PDB" id="7EOT"/>
    </source>
</evidence>
<evidence type="ECO:0007744" key="57">
    <source>
        <dbReference type="PDB" id="7EOU"/>
    </source>
</evidence>
<evidence type="ECO:0007829" key="58">
    <source>
        <dbReference type="PDB" id="3NFL"/>
    </source>
</evidence>
<evidence type="ECO:0007829" key="59">
    <source>
        <dbReference type="PDB" id="5H8F"/>
    </source>
</evidence>
<evidence type="ECO:0007829" key="60">
    <source>
        <dbReference type="PDB" id="5I2K"/>
    </source>
</evidence>
<evidence type="ECO:0007829" key="61">
    <source>
        <dbReference type="PDB" id="5I2N"/>
    </source>
</evidence>
<evidence type="ECO:0007829" key="62">
    <source>
        <dbReference type="PDB" id="5KCJ"/>
    </source>
</evidence>
<evidence type="ECO:0007829" key="63">
    <source>
        <dbReference type="PDB" id="7EU7"/>
    </source>
</evidence>
<dbReference type="EMBL" id="U09002">
    <property type="protein sequence ID" value="AAB60343.1"/>
    <property type="molecule type" value="mRNA"/>
</dbReference>
<dbReference type="EMBL" id="U90277">
    <property type="protein sequence ID" value="AAB49992.1"/>
    <property type="molecule type" value="mRNA"/>
</dbReference>
<dbReference type="EMBL" id="AC006531">
    <property type="status" value="NOT_ANNOTATED_CDS"/>
    <property type="molecule type" value="Genomic_DNA"/>
</dbReference>
<dbReference type="EMBL" id="AC007218">
    <property type="status" value="NOT_ANNOTATED_CDS"/>
    <property type="molecule type" value="Genomic_DNA"/>
</dbReference>
<dbReference type="EMBL" id="AC022168">
    <property type="status" value="NOT_ANNOTATED_CDS"/>
    <property type="molecule type" value="Genomic_DNA"/>
</dbReference>
<dbReference type="EMBL" id="AC026423">
    <property type="status" value="NOT_ANNOTATED_CDS"/>
    <property type="molecule type" value="Genomic_DNA"/>
</dbReference>
<dbReference type="EMBL" id="AC133565">
    <property type="status" value="NOT_ANNOTATED_CDS"/>
    <property type="molecule type" value="Genomic_DNA"/>
</dbReference>
<dbReference type="EMBL" id="BC117131">
    <property type="protein sequence ID" value="AAI17132.1"/>
    <property type="molecule type" value="mRNA"/>
</dbReference>
<dbReference type="EMBL" id="BC143273">
    <property type="protein sequence ID" value="AAI43274.1"/>
    <property type="molecule type" value="mRNA"/>
</dbReference>
<dbReference type="CCDS" id="CCDS10539.1">
    <molecule id="Q12879-1"/>
</dbReference>
<dbReference type="CCDS" id="CCDS45407.1">
    <molecule id="Q12879-2"/>
</dbReference>
<dbReference type="PIR" id="S47555">
    <property type="entry name" value="S47555"/>
</dbReference>
<dbReference type="RefSeq" id="NP_000824.1">
    <molecule id="Q12879-1"/>
    <property type="nucleotide sequence ID" value="NM_000833.5"/>
</dbReference>
<dbReference type="RefSeq" id="NP_001127879.1">
    <molecule id="Q12879-1"/>
    <property type="nucleotide sequence ID" value="NM_001134407.3"/>
</dbReference>
<dbReference type="RefSeq" id="NP_001127880.1">
    <molecule id="Q12879-2"/>
    <property type="nucleotide sequence ID" value="NM_001134408.2"/>
</dbReference>
<dbReference type="RefSeq" id="XP_011520763.1">
    <property type="nucleotide sequence ID" value="XM_011522461.2"/>
</dbReference>
<dbReference type="RefSeq" id="XP_047289949.1">
    <molecule id="Q12879-1"/>
    <property type="nucleotide sequence ID" value="XM_047433993.1"/>
</dbReference>
<dbReference type="RefSeq" id="XP_047289950.1">
    <molecule id="Q12879-2"/>
    <property type="nucleotide sequence ID" value="XM_047433994.1"/>
</dbReference>
<dbReference type="RefSeq" id="XP_054236124.1">
    <molecule id="Q12879-1"/>
    <property type="nucleotide sequence ID" value="XM_054380149.1"/>
</dbReference>
<dbReference type="RefSeq" id="XP_054236126.1">
    <molecule id="Q12879-2"/>
    <property type="nucleotide sequence ID" value="XM_054380151.1"/>
</dbReference>
<dbReference type="PDB" id="3NFL">
    <property type="method" value="X-ray"/>
    <property type="resolution" value="1.91 A"/>
    <property type="chains" value="E/F/G/H=1449-1464"/>
</dbReference>
<dbReference type="PDB" id="5H8F">
    <property type="method" value="X-ray"/>
    <property type="resolution" value="1.81 A"/>
    <property type="chains" value="A=401-539, A=661-802"/>
</dbReference>
<dbReference type="PDB" id="5H8H">
    <property type="method" value="X-ray"/>
    <property type="resolution" value="2.23 A"/>
    <property type="chains" value="A=401-539, A=661-802"/>
</dbReference>
<dbReference type="PDB" id="5H8N">
    <property type="method" value="X-ray"/>
    <property type="resolution" value="2.50 A"/>
    <property type="chains" value="A=401-539, A=661-802"/>
</dbReference>
<dbReference type="PDB" id="5H8Q">
    <property type="method" value="X-ray"/>
    <property type="resolution" value="1.90 A"/>
    <property type="chains" value="A=401-539, A=661-802"/>
</dbReference>
<dbReference type="PDB" id="5I2K">
    <property type="method" value="X-ray"/>
    <property type="resolution" value="2.86 A"/>
    <property type="chains" value="A=401-539, A=661-802"/>
</dbReference>
<dbReference type="PDB" id="5I2N">
    <property type="method" value="X-ray"/>
    <property type="resolution" value="2.12 A"/>
    <property type="chains" value="A=401-539, A=661-802"/>
</dbReference>
<dbReference type="PDB" id="5KCJ">
    <property type="method" value="X-ray"/>
    <property type="resolution" value="2.09 A"/>
    <property type="chains" value="A=401-539, A=661-802"/>
</dbReference>
<dbReference type="PDB" id="5KDT">
    <property type="method" value="X-ray"/>
    <property type="resolution" value="2.44 A"/>
    <property type="chains" value="A=401-539, A=661-802"/>
</dbReference>
<dbReference type="PDB" id="5TP9">
    <property type="method" value="X-ray"/>
    <property type="resolution" value="2.40 A"/>
    <property type="chains" value="A=401-539, A=661-802"/>
</dbReference>
<dbReference type="PDB" id="5TPA">
    <property type="method" value="X-ray"/>
    <property type="resolution" value="2.48 A"/>
    <property type="chains" value="A=401-539, A=661-802"/>
</dbReference>
<dbReference type="PDB" id="6IRA">
    <property type="method" value="EM"/>
    <property type="resolution" value="4.50 A"/>
    <property type="chains" value="B/D=1-842"/>
</dbReference>
<dbReference type="PDB" id="6IRF">
    <property type="method" value="EM"/>
    <property type="resolution" value="5.10 A"/>
    <property type="chains" value="B/D=1-841"/>
</dbReference>
<dbReference type="PDB" id="6IRG">
    <property type="method" value="EM"/>
    <property type="resolution" value="5.50 A"/>
    <property type="chains" value="B/D=1-841"/>
</dbReference>
<dbReference type="PDB" id="6IRH">
    <property type="method" value="EM"/>
    <property type="resolution" value="7.80 A"/>
    <property type="chains" value="B/D=1-841"/>
</dbReference>
<dbReference type="PDB" id="7EOQ">
    <property type="method" value="EM"/>
    <property type="resolution" value="4.10 A"/>
    <property type="chains" value="A/C=1-842"/>
</dbReference>
<dbReference type="PDB" id="7EOR">
    <property type="method" value="EM"/>
    <property type="resolution" value="4.00 A"/>
    <property type="chains" value="A/C=1-842"/>
</dbReference>
<dbReference type="PDB" id="7EOS">
    <property type="method" value="EM"/>
    <property type="resolution" value="3.90 A"/>
    <property type="chains" value="A/C=1-842"/>
</dbReference>
<dbReference type="PDB" id="7EOT">
    <property type="method" value="EM"/>
    <property type="resolution" value="3.80 A"/>
    <property type="chains" value="A/C=1-842"/>
</dbReference>
<dbReference type="PDB" id="7EOU">
    <property type="method" value="EM"/>
    <property type="resolution" value="4.30 A"/>
    <property type="chains" value="A/C=1-842"/>
</dbReference>
<dbReference type="PDB" id="7EU7">
    <property type="method" value="EM"/>
    <property type="resolution" value="3.50 A"/>
    <property type="chains" value="B/D=1-841"/>
</dbReference>
<dbReference type="PDB" id="8E99">
    <property type="method" value="EM"/>
    <property type="resolution" value="4.24 A"/>
    <property type="chains" value="B=30-851"/>
</dbReference>
<dbReference type="PDB" id="8JIZ">
    <property type="method" value="EM"/>
    <property type="resolution" value="3.80 A"/>
    <property type="chains" value="A/C=1-841"/>
</dbReference>
<dbReference type="PDB" id="8JJ0">
    <property type="method" value="EM"/>
    <property type="resolution" value="4.50 A"/>
    <property type="chains" value="A/C=1-841"/>
</dbReference>
<dbReference type="PDB" id="8JJ1">
    <property type="method" value="EM"/>
    <property type="resolution" value="3.77 A"/>
    <property type="chains" value="A/C=1-841"/>
</dbReference>
<dbReference type="PDB" id="8JJ2">
    <property type="method" value="EM"/>
    <property type="resolution" value="4.30 A"/>
    <property type="chains" value="A/C=1-841"/>
</dbReference>
<dbReference type="PDB" id="8VUH">
    <property type="method" value="EM"/>
    <property type="resolution" value="4.42 A"/>
    <property type="chains" value="B/D=34-841"/>
</dbReference>
<dbReference type="PDB" id="8VUJ">
    <property type="method" value="EM"/>
    <property type="resolution" value="3.92 A"/>
    <property type="chains" value="B/D=34-841"/>
</dbReference>
<dbReference type="PDB" id="8VUL">
    <property type="method" value="EM"/>
    <property type="resolution" value="3.83 A"/>
    <property type="chains" value="B=34-399"/>
</dbReference>
<dbReference type="PDB" id="8VUN">
    <property type="method" value="EM"/>
    <property type="resolution" value="4.01 A"/>
    <property type="chains" value="B/D=34-841"/>
</dbReference>
<dbReference type="PDB" id="8VUQ">
    <property type="method" value="EM"/>
    <property type="resolution" value="3.85 A"/>
    <property type="chains" value="B=34-396"/>
</dbReference>
<dbReference type="PDB" id="8VUR">
    <property type="method" value="EM"/>
    <property type="resolution" value="3.84 A"/>
    <property type="chains" value="B/D=34-841"/>
</dbReference>
<dbReference type="PDB" id="8VUT">
    <property type="method" value="EM"/>
    <property type="resolution" value="3.70 A"/>
    <property type="chains" value="B/D=34-841"/>
</dbReference>
<dbReference type="PDBsum" id="3NFL"/>
<dbReference type="PDBsum" id="5H8F"/>
<dbReference type="PDBsum" id="5H8H"/>
<dbReference type="PDBsum" id="5H8N"/>
<dbReference type="PDBsum" id="5H8Q"/>
<dbReference type="PDBsum" id="5I2K"/>
<dbReference type="PDBsum" id="5I2N"/>
<dbReference type="PDBsum" id="5KCJ"/>
<dbReference type="PDBsum" id="5KDT"/>
<dbReference type="PDBsum" id="5TP9"/>
<dbReference type="PDBsum" id="5TPA"/>
<dbReference type="PDBsum" id="6IRA"/>
<dbReference type="PDBsum" id="6IRF"/>
<dbReference type="PDBsum" id="6IRG"/>
<dbReference type="PDBsum" id="6IRH"/>
<dbReference type="PDBsum" id="7EOQ"/>
<dbReference type="PDBsum" id="7EOR"/>
<dbReference type="PDBsum" id="7EOS"/>
<dbReference type="PDBsum" id="7EOT"/>
<dbReference type="PDBsum" id="7EOU"/>
<dbReference type="PDBsum" id="7EU7"/>
<dbReference type="PDBsum" id="8E99"/>
<dbReference type="PDBsum" id="8JIZ"/>
<dbReference type="PDBsum" id="8JJ0"/>
<dbReference type="PDBsum" id="8JJ1"/>
<dbReference type="PDBsum" id="8JJ2"/>
<dbReference type="PDBsum" id="8VUH"/>
<dbReference type="PDBsum" id="8VUJ"/>
<dbReference type="PDBsum" id="8VUL"/>
<dbReference type="PDBsum" id="8VUN"/>
<dbReference type="PDBsum" id="8VUQ"/>
<dbReference type="PDBsum" id="8VUR"/>
<dbReference type="PDBsum" id="8VUT"/>
<dbReference type="EMDB" id="EMD-27961"/>
<dbReference type="EMDB" id="EMD-31227"/>
<dbReference type="EMDB" id="EMD-31228"/>
<dbReference type="EMDB" id="EMD-31229"/>
<dbReference type="EMDB" id="EMD-31230"/>
<dbReference type="EMDB" id="EMD-31231"/>
<dbReference type="EMDB" id="EMD-31308"/>
<dbReference type="EMDB" id="EMD-36335"/>
<dbReference type="EMDB" id="EMD-36336"/>
<dbReference type="EMDB" id="EMD-36337"/>
<dbReference type="EMDB" id="EMD-36338"/>
<dbReference type="EMDB" id="EMD-43530"/>
<dbReference type="EMDB" id="EMD-43531"/>
<dbReference type="EMDB" id="EMD-43532"/>
<dbReference type="EMDB" id="EMD-43534"/>
<dbReference type="EMDB" id="EMD-43536"/>
<dbReference type="EMDB" id="EMD-43537"/>
<dbReference type="EMDB" id="EMD-43539"/>
<dbReference type="EMDB" id="EMD-9714"/>
<dbReference type="EMDB" id="EMD-9715"/>
<dbReference type="EMDB" id="EMD-9716"/>
<dbReference type="EMDB" id="EMD-9717"/>
<dbReference type="SASBDB" id="Q12879"/>
<dbReference type="SMR" id="Q12879"/>
<dbReference type="BioGRID" id="109160">
    <property type="interactions" value="68"/>
</dbReference>
<dbReference type="ComplexPortal" id="CPX-2202">
    <property type="entry name" value="NMDA receptor complex, GluN1-GluN2A"/>
</dbReference>
<dbReference type="ComplexPortal" id="CPX-294">
    <property type="entry name" value="NMDA receptor complex, GluN1-GluN2A-GluN2B"/>
</dbReference>
<dbReference type="CORUM" id="Q12879"/>
<dbReference type="DIP" id="DIP-40798N"/>
<dbReference type="FunCoup" id="Q12879">
    <property type="interactions" value="1231"/>
</dbReference>
<dbReference type="IntAct" id="Q12879">
    <property type="interactions" value="40"/>
</dbReference>
<dbReference type="MINT" id="Q12879"/>
<dbReference type="STRING" id="9606.ENSP00000332549"/>
<dbReference type="BindingDB" id="Q12879"/>
<dbReference type="ChEMBL" id="CHEMBL1972"/>
<dbReference type="DrugBank" id="DB00659">
    <property type="generic name" value="Acamprosate"/>
</dbReference>
<dbReference type="DrugBank" id="DB06151">
    <property type="generic name" value="Acetylcysteine"/>
</dbReference>
<dbReference type="DrugBank" id="DB01238">
    <property type="generic name" value="Aripiprazole"/>
</dbReference>
<dbReference type="DrugBank" id="DB00128">
    <property type="generic name" value="Aspartic acid"/>
</dbReference>
<dbReference type="DrugBank" id="DB00289">
    <property type="generic name" value="Atomoxetine"/>
</dbReference>
<dbReference type="DrugBank" id="DB02655">
    <property type="generic name" value="D-Aspartic Acid"/>
</dbReference>
<dbReference type="DrugBank" id="DB00647">
    <property type="generic name" value="Dextropropoxyphene"/>
</dbReference>
<dbReference type="DrugBank" id="DB00843">
    <property type="generic name" value="Donepezil"/>
</dbReference>
<dbReference type="DrugBank" id="DB00228">
    <property type="generic name" value="Enflurane"/>
</dbReference>
<dbReference type="DrugBank" id="DB11823">
    <property type="generic name" value="Esketamine"/>
</dbReference>
<dbReference type="DrugBank" id="DB00949">
    <property type="generic name" value="Felbamate"/>
</dbReference>
<dbReference type="DrugBank" id="DB03759">
    <property type="generic name" value="FG-9041"/>
</dbReference>
<dbReference type="DrugBank" id="DB13146">
    <property type="generic name" value="Fluciclovine (18F)"/>
</dbReference>
<dbReference type="DrugBank" id="DB06741">
    <property type="generic name" value="Gavestinel"/>
</dbReference>
<dbReference type="DrugBank" id="DB00142">
    <property type="generic name" value="Glutamic acid"/>
</dbReference>
<dbReference type="DrugBank" id="DB00145">
    <property type="generic name" value="Glycine"/>
</dbReference>
<dbReference type="DrugBank" id="DB00874">
    <property type="generic name" value="Guaifenesin"/>
</dbReference>
<dbReference type="DrugBank" id="DB01159">
    <property type="generic name" value="Halothane"/>
</dbReference>
<dbReference type="DrugBank" id="DB06738">
    <property type="generic name" value="Ketobemidone"/>
</dbReference>
<dbReference type="DrugBank" id="DB11937">
    <property type="generic name" value="Kynurenic Acid"/>
</dbReference>
<dbReference type="DrugBank" id="DB09409">
    <property type="generic name" value="Magnesium acetate tetrahydrate"/>
</dbReference>
<dbReference type="DrugBank" id="DB09481">
    <property type="generic name" value="Magnesium carbonate"/>
</dbReference>
<dbReference type="DrugBank" id="DB01043">
    <property type="generic name" value="Memantine"/>
</dbReference>
<dbReference type="DrugBank" id="DB00454">
    <property type="generic name" value="Meperidine"/>
</dbReference>
<dbReference type="DrugBank" id="DB00333">
    <property type="generic name" value="Methadone"/>
</dbReference>
<dbReference type="DrugBank" id="DB04896">
    <property type="generic name" value="Milnacipran"/>
</dbReference>
<dbReference type="DrugBank" id="DB00312">
    <property type="generic name" value="Pentobarbital"/>
</dbReference>
<dbReference type="DrugBank" id="DB03575">
    <property type="generic name" value="Phencyclidine"/>
</dbReference>
<dbReference type="DrugBank" id="DB01174">
    <property type="generic name" value="Phenobarbital"/>
</dbReference>
<dbReference type="DrugBank" id="DB01708">
    <property type="generic name" value="Prasterone"/>
</dbReference>
<dbReference type="DrugBank" id="DB00418">
    <property type="generic name" value="Secobarbital"/>
</dbReference>
<dbReference type="DrugBank" id="DB00127">
    <property type="generic name" value="Spermine"/>
</dbReference>
<dbReference type="DrugBank" id="DB01520">
    <property type="generic name" value="Tenocyclidine"/>
</dbReference>
<dbReference type="DrugBank" id="DB00193">
    <property type="generic name" value="Tramadol"/>
</dbReference>
<dbReference type="DrugCentral" id="Q12879"/>
<dbReference type="GuidetoPHARMACOLOGY" id="456"/>
<dbReference type="TCDB" id="1.A.10.1.20">
    <property type="family name" value="the glutamate-gated ion channel (gic) family of neurotransmitter receptors"/>
</dbReference>
<dbReference type="GlyCosmos" id="Q12879">
    <property type="glycosylation" value="7 sites, No reported glycans"/>
</dbReference>
<dbReference type="GlyGen" id="Q12879">
    <property type="glycosylation" value="8 sites, 1 O-linked glycan (1 site)"/>
</dbReference>
<dbReference type="iPTMnet" id="Q12879"/>
<dbReference type="PhosphoSitePlus" id="Q12879"/>
<dbReference type="BioMuta" id="GRIN2A"/>
<dbReference type="DMDM" id="14285603"/>
<dbReference type="MassIVE" id="Q12879"/>
<dbReference type="PaxDb" id="9606-ENSP00000379818"/>
<dbReference type="PeptideAtlas" id="Q12879"/>
<dbReference type="ProteomicsDB" id="58998">
    <molecule id="Q12879-1"/>
</dbReference>
<dbReference type="ProteomicsDB" id="61175"/>
<dbReference type="ABCD" id="Q12879">
    <property type="antibodies" value="2 sequenced antibodies"/>
</dbReference>
<dbReference type="Antibodypedia" id="1402">
    <property type="antibodies" value="732 antibodies from 42 providers"/>
</dbReference>
<dbReference type="DNASU" id="2903"/>
<dbReference type="Ensembl" id="ENST00000330684.4">
    <molecule id="Q12879-1"/>
    <property type="protein sequence ID" value="ENSP00000332549.3"/>
    <property type="gene ID" value="ENSG00000183454.19"/>
</dbReference>
<dbReference type="Ensembl" id="ENST00000396573.6">
    <molecule id="Q12879-1"/>
    <property type="protein sequence ID" value="ENSP00000379818.2"/>
    <property type="gene ID" value="ENSG00000183454.19"/>
</dbReference>
<dbReference type="Ensembl" id="ENST00000562109.5">
    <molecule id="Q12879-2"/>
    <property type="protein sequence ID" value="ENSP00000454998.1"/>
    <property type="gene ID" value="ENSG00000183454.19"/>
</dbReference>
<dbReference type="GeneID" id="2903"/>
<dbReference type="KEGG" id="hsa:2903"/>
<dbReference type="MANE-Select" id="ENST00000330684.4">
    <property type="protein sequence ID" value="ENSP00000332549.3"/>
    <property type="RefSeq nucleotide sequence ID" value="NM_001134407.3"/>
    <property type="RefSeq protein sequence ID" value="NP_001127879.1"/>
</dbReference>
<dbReference type="UCSC" id="uc002czr.5">
    <molecule id="Q12879-1"/>
    <property type="organism name" value="human"/>
</dbReference>
<dbReference type="AGR" id="HGNC:4585"/>
<dbReference type="CTD" id="2903"/>
<dbReference type="DisGeNET" id="2903"/>
<dbReference type="GeneCards" id="GRIN2A"/>
<dbReference type="GeneReviews" id="GRIN2A"/>
<dbReference type="HGNC" id="HGNC:4585">
    <property type="gene designation" value="GRIN2A"/>
</dbReference>
<dbReference type="HPA" id="ENSG00000183454">
    <property type="expression patterns" value="Tissue enriched (brain)"/>
</dbReference>
<dbReference type="MalaCards" id="GRIN2A"/>
<dbReference type="MIM" id="138253">
    <property type="type" value="gene"/>
</dbReference>
<dbReference type="MIM" id="245570">
    <property type="type" value="phenotype"/>
</dbReference>
<dbReference type="neXtProt" id="NX_Q12879"/>
<dbReference type="OpenTargets" id="ENSG00000183454"/>
<dbReference type="Orphanet" id="725">
    <property type="disease" value="Developmental and epileptic encephalopathy with spike-wave activation in sleep"/>
</dbReference>
<dbReference type="Orphanet" id="289266">
    <property type="disease" value="Early-onset epileptic encephalopathy and intellectual disability due to GRIN2A mutation"/>
</dbReference>
<dbReference type="Orphanet" id="98818">
    <property type="disease" value="Landau-Kleffner syndrome"/>
</dbReference>
<dbReference type="Orphanet" id="163721">
    <property type="disease" value="Rolandic epilepsy-speech dyspraxia syndrome"/>
</dbReference>
<dbReference type="Orphanet" id="1945">
    <property type="disease" value="Self-limited epilepsy with centrotemporal spikes"/>
</dbReference>
<dbReference type="PharmGKB" id="PA28979"/>
<dbReference type="VEuPathDB" id="HostDB:ENSG00000183454"/>
<dbReference type="eggNOG" id="KOG1053">
    <property type="taxonomic scope" value="Eukaryota"/>
</dbReference>
<dbReference type="GeneTree" id="ENSGT00940000156222"/>
<dbReference type="HOGENOM" id="CLU_002598_0_0_1"/>
<dbReference type="InParanoid" id="Q12879"/>
<dbReference type="OMA" id="KDTIFGD"/>
<dbReference type="OrthoDB" id="5984008at2759"/>
<dbReference type="PAN-GO" id="Q12879">
    <property type="GO annotations" value="6 GO annotations based on evolutionary models"/>
</dbReference>
<dbReference type="PhylomeDB" id="Q12879"/>
<dbReference type="TreeFam" id="TF314731"/>
<dbReference type="PathwayCommons" id="Q12879"/>
<dbReference type="Reactome" id="R-HSA-438066">
    <property type="pathway name" value="Unblocking of NMDA receptors, glutamate binding and activation"/>
</dbReference>
<dbReference type="Reactome" id="R-HSA-6794361">
    <property type="pathway name" value="Neurexins and neuroligins"/>
</dbReference>
<dbReference type="Reactome" id="R-HSA-8849932">
    <property type="pathway name" value="Synaptic adhesion-like molecules"/>
</dbReference>
<dbReference type="Reactome" id="R-HSA-9022699">
    <property type="pathway name" value="MECP2 regulates neuronal receptors and channels"/>
</dbReference>
<dbReference type="Reactome" id="R-HSA-9609736">
    <property type="pathway name" value="Assembly and cell surface presentation of NMDA receptors"/>
</dbReference>
<dbReference type="Reactome" id="R-HSA-9617324">
    <property type="pathway name" value="Negative regulation of NMDA receptor-mediated neuronal transmission"/>
</dbReference>
<dbReference type="Reactome" id="R-HSA-9620244">
    <property type="pathway name" value="Long-term potentiation"/>
</dbReference>
<dbReference type="SignaLink" id="Q12879"/>
<dbReference type="SIGNOR" id="Q12879"/>
<dbReference type="BioGRID-ORCS" id="2903">
    <property type="hits" value="8 hits in 1154 CRISPR screens"/>
</dbReference>
<dbReference type="CD-CODE" id="FB4E32DD">
    <property type="entry name" value="Presynaptic clusters and postsynaptic densities"/>
</dbReference>
<dbReference type="ChiTaRS" id="GRIN2A">
    <property type="organism name" value="human"/>
</dbReference>
<dbReference type="EvolutionaryTrace" id="Q12879"/>
<dbReference type="GeneWiki" id="GRIN2A"/>
<dbReference type="GenomeRNAi" id="2903"/>
<dbReference type="Pharos" id="Q12879">
    <property type="development level" value="Tclin"/>
</dbReference>
<dbReference type="PRO" id="PR:Q12879"/>
<dbReference type="Proteomes" id="UP000005640">
    <property type="component" value="Chromosome 16"/>
</dbReference>
<dbReference type="RNAct" id="Q12879">
    <property type="molecule type" value="protein"/>
</dbReference>
<dbReference type="Bgee" id="ENSG00000183454">
    <property type="expression patterns" value="Expressed in Brodmann (1909) area 23 and 140 other cell types or tissues"/>
</dbReference>
<dbReference type="ExpressionAtlas" id="Q12879">
    <property type="expression patterns" value="baseline and differential"/>
</dbReference>
<dbReference type="GO" id="GO:0009986">
    <property type="term" value="C:cell surface"/>
    <property type="evidence" value="ECO:0000250"/>
    <property type="project" value="ARUK-UCL"/>
</dbReference>
<dbReference type="GO" id="GO:0030659">
    <property type="term" value="C:cytoplasmic vesicle membrane"/>
    <property type="evidence" value="ECO:0007669"/>
    <property type="project" value="UniProtKB-SubCell"/>
</dbReference>
<dbReference type="GO" id="GO:0043197">
    <property type="term" value="C:dendritic spine"/>
    <property type="evidence" value="ECO:0007669"/>
    <property type="project" value="UniProtKB-SubCell"/>
</dbReference>
<dbReference type="GO" id="GO:0005789">
    <property type="term" value="C:endoplasmic reticulum membrane"/>
    <property type="evidence" value="ECO:0000304"/>
    <property type="project" value="Reactome"/>
</dbReference>
<dbReference type="GO" id="GO:0098978">
    <property type="term" value="C:glutamatergic synapse"/>
    <property type="evidence" value="ECO:0007669"/>
    <property type="project" value="Ensembl"/>
</dbReference>
<dbReference type="GO" id="GO:0017146">
    <property type="term" value="C:NMDA selective glutamate receptor complex"/>
    <property type="evidence" value="ECO:0000314"/>
    <property type="project" value="UniProtKB"/>
</dbReference>
<dbReference type="GO" id="GO:0005886">
    <property type="term" value="C:plasma membrane"/>
    <property type="evidence" value="ECO:0000314"/>
    <property type="project" value="UniProtKB"/>
</dbReference>
<dbReference type="GO" id="GO:0014069">
    <property type="term" value="C:postsynaptic density"/>
    <property type="evidence" value="ECO:0000250"/>
    <property type="project" value="UniProtKB"/>
</dbReference>
<dbReference type="GO" id="GO:0098839">
    <property type="term" value="C:postsynaptic density membrane"/>
    <property type="evidence" value="ECO:0000318"/>
    <property type="project" value="GO_Central"/>
</dbReference>
<dbReference type="GO" id="GO:0045211">
    <property type="term" value="C:postsynaptic membrane"/>
    <property type="evidence" value="ECO:0000250"/>
    <property type="project" value="UniProtKB"/>
</dbReference>
<dbReference type="GO" id="GO:0042734">
    <property type="term" value="C:presynaptic membrane"/>
    <property type="evidence" value="ECO:0007669"/>
    <property type="project" value="Ensembl"/>
</dbReference>
<dbReference type="GO" id="GO:0097060">
    <property type="term" value="C:synaptic membrane"/>
    <property type="evidence" value="ECO:0000250"/>
    <property type="project" value="ARUK-UCL"/>
</dbReference>
<dbReference type="GO" id="GO:0008021">
    <property type="term" value="C:synaptic vesicle"/>
    <property type="evidence" value="ECO:0007669"/>
    <property type="project" value="Ensembl"/>
</dbReference>
<dbReference type="GO" id="GO:0001540">
    <property type="term" value="F:amyloid-beta binding"/>
    <property type="evidence" value="ECO:0000304"/>
    <property type="project" value="ARUK-UCL"/>
</dbReference>
<dbReference type="GO" id="GO:0022849">
    <property type="term" value="F:glutamate-gated calcium ion channel activity"/>
    <property type="evidence" value="ECO:0000314"/>
    <property type="project" value="UniProtKB"/>
</dbReference>
<dbReference type="GO" id="GO:0004972">
    <property type="term" value="F:NMDA glutamate receptor activity"/>
    <property type="evidence" value="ECO:0000314"/>
    <property type="project" value="UniProtKB"/>
</dbReference>
<dbReference type="GO" id="GO:1904315">
    <property type="term" value="F:transmitter-gated monoatomic ion channel activity involved in regulation of postsynaptic membrane potential"/>
    <property type="evidence" value="ECO:0000318"/>
    <property type="project" value="GO_Central"/>
</dbReference>
<dbReference type="GO" id="GO:0008270">
    <property type="term" value="F:zinc ion binding"/>
    <property type="evidence" value="ECO:0000250"/>
    <property type="project" value="UniProtKB"/>
</dbReference>
<dbReference type="GO" id="GO:0007420">
    <property type="term" value="P:brain development"/>
    <property type="evidence" value="ECO:0000303"/>
    <property type="project" value="ARUK-UCL"/>
</dbReference>
<dbReference type="GO" id="GO:0097553">
    <property type="term" value="P:calcium ion transmembrane import into cytosol"/>
    <property type="evidence" value="ECO:0000314"/>
    <property type="project" value="UniProtKB"/>
</dbReference>
<dbReference type="GO" id="GO:0070588">
    <property type="term" value="P:calcium ion transmembrane transport"/>
    <property type="evidence" value="ECO:0000314"/>
    <property type="project" value="UniProtKB"/>
</dbReference>
<dbReference type="GO" id="GO:0007268">
    <property type="term" value="P:chemical synaptic transmission"/>
    <property type="evidence" value="ECO:0000304"/>
    <property type="project" value="ProtInc"/>
</dbReference>
<dbReference type="GO" id="GO:0033058">
    <property type="term" value="P:directional locomotion"/>
    <property type="evidence" value="ECO:0007669"/>
    <property type="project" value="Ensembl"/>
</dbReference>
<dbReference type="GO" id="GO:0042417">
    <property type="term" value="P:dopamine metabolic process"/>
    <property type="evidence" value="ECO:0007669"/>
    <property type="project" value="Ensembl"/>
</dbReference>
<dbReference type="GO" id="GO:0098976">
    <property type="term" value="P:excitatory chemical synaptic transmission"/>
    <property type="evidence" value="ECO:0000303"/>
    <property type="project" value="ARUK-UCL"/>
</dbReference>
<dbReference type="GO" id="GO:0060079">
    <property type="term" value="P:excitatory postsynaptic potential"/>
    <property type="evidence" value="ECO:0000318"/>
    <property type="project" value="GO_Central"/>
</dbReference>
<dbReference type="GO" id="GO:0007215">
    <property type="term" value="P:glutamate receptor signaling pathway"/>
    <property type="evidence" value="ECO:0000304"/>
    <property type="project" value="ProtInc"/>
</dbReference>
<dbReference type="GO" id="GO:0035235">
    <property type="term" value="P:ionotropic glutamate receptor signaling pathway"/>
    <property type="evidence" value="ECO:0000266"/>
    <property type="project" value="ComplexPortal"/>
</dbReference>
<dbReference type="GO" id="GO:0007611">
    <property type="term" value="P:learning or memory"/>
    <property type="evidence" value="ECO:0000304"/>
    <property type="project" value="ProtInc"/>
</dbReference>
<dbReference type="GO" id="GO:0060291">
    <property type="term" value="P:long-term synaptic potentiation"/>
    <property type="evidence" value="ECO:0000318"/>
    <property type="project" value="GO_Central"/>
</dbReference>
<dbReference type="GO" id="GO:0007613">
    <property type="term" value="P:memory"/>
    <property type="evidence" value="ECO:0007669"/>
    <property type="project" value="Ensembl"/>
</dbReference>
<dbReference type="GO" id="GO:0098655">
    <property type="term" value="P:monoatomic cation transmembrane transport"/>
    <property type="evidence" value="ECO:0000314"/>
    <property type="project" value="UniProt"/>
</dbReference>
<dbReference type="GO" id="GO:0042177">
    <property type="term" value="P:negative regulation of protein catabolic process"/>
    <property type="evidence" value="ECO:0007669"/>
    <property type="project" value="Ensembl"/>
</dbReference>
<dbReference type="GO" id="GO:0022008">
    <property type="term" value="P:neurogenesis"/>
    <property type="evidence" value="ECO:0007669"/>
    <property type="project" value="Ensembl"/>
</dbReference>
<dbReference type="GO" id="GO:0043065">
    <property type="term" value="P:positive regulation of apoptotic process"/>
    <property type="evidence" value="ECO:0007669"/>
    <property type="project" value="Ensembl"/>
</dbReference>
<dbReference type="GO" id="GO:2000463">
    <property type="term" value="P:positive regulation of excitatory postsynaptic potential"/>
    <property type="evidence" value="ECO:0000266"/>
    <property type="project" value="ComplexPortal"/>
</dbReference>
<dbReference type="GO" id="GO:0051968">
    <property type="term" value="P:positive regulation of synaptic transmission, glutamatergic"/>
    <property type="evidence" value="ECO:0000266"/>
    <property type="project" value="ComplexPortal"/>
</dbReference>
<dbReference type="GO" id="GO:0030163">
    <property type="term" value="P:protein catabolic process"/>
    <property type="evidence" value="ECO:0007669"/>
    <property type="project" value="Ensembl"/>
</dbReference>
<dbReference type="GO" id="GO:1903539">
    <property type="term" value="P:protein localization to postsynaptic membrane"/>
    <property type="evidence" value="ECO:0007669"/>
    <property type="project" value="Ensembl"/>
</dbReference>
<dbReference type="GO" id="GO:1904062">
    <property type="term" value="P:regulation of monoatomic cation transmembrane transport"/>
    <property type="evidence" value="ECO:0000266"/>
    <property type="project" value="ComplexPortal"/>
</dbReference>
<dbReference type="GO" id="GO:0048168">
    <property type="term" value="P:regulation of neuronal synaptic plasticity"/>
    <property type="evidence" value="ECO:0000303"/>
    <property type="project" value="ComplexPortal"/>
</dbReference>
<dbReference type="GO" id="GO:0048167">
    <property type="term" value="P:regulation of synaptic plasticity"/>
    <property type="evidence" value="ECO:0000250"/>
    <property type="project" value="UniProtKB"/>
</dbReference>
<dbReference type="GO" id="GO:0001975">
    <property type="term" value="P:response to amphetamine"/>
    <property type="evidence" value="ECO:0007669"/>
    <property type="project" value="Ensembl"/>
</dbReference>
<dbReference type="GO" id="GO:0045471">
    <property type="term" value="P:response to ethanol"/>
    <property type="evidence" value="ECO:0000314"/>
    <property type="project" value="UniProtKB"/>
</dbReference>
<dbReference type="GO" id="GO:0009611">
    <property type="term" value="P:response to wounding"/>
    <property type="evidence" value="ECO:0007669"/>
    <property type="project" value="Ensembl"/>
</dbReference>
<dbReference type="GO" id="GO:0009410">
    <property type="term" value="P:response to xenobiotic stimulus"/>
    <property type="evidence" value="ECO:0007669"/>
    <property type="project" value="Ensembl"/>
</dbReference>
<dbReference type="GO" id="GO:0019233">
    <property type="term" value="P:sensory perception of pain"/>
    <property type="evidence" value="ECO:0007669"/>
    <property type="project" value="Ensembl"/>
</dbReference>
<dbReference type="GO" id="GO:0042428">
    <property type="term" value="P:serotonin metabolic process"/>
    <property type="evidence" value="ECO:0007669"/>
    <property type="project" value="Ensembl"/>
</dbReference>
<dbReference type="GO" id="GO:0030431">
    <property type="term" value="P:sleep"/>
    <property type="evidence" value="ECO:0007669"/>
    <property type="project" value="Ensembl"/>
</dbReference>
<dbReference type="GO" id="GO:0035725">
    <property type="term" value="P:sodium ion transmembrane transport"/>
    <property type="evidence" value="ECO:0000314"/>
    <property type="project" value="UniProtKB"/>
</dbReference>
<dbReference type="GO" id="GO:0001964">
    <property type="term" value="P:startle response"/>
    <property type="evidence" value="ECO:0007669"/>
    <property type="project" value="Ensembl"/>
</dbReference>
<dbReference type="GO" id="GO:0035249">
    <property type="term" value="P:synaptic transmission, glutamatergic"/>
    <property type="evidence" value="ECO:0000318"/>
    <property type="project" value="GO_Central"/>
</dbReference>
<dbReference type="GO" id="GO:0008542">
    <property type="term" value="P:visual learning"/>
    <property type="evidence" value="ECO:0007669"/>
    <property type="project" value="Ensembl"/>
</dbReference>
<dbReference type="CDD" id="cd06378">
    <property type="entry name" value="PBP1_iGluR_NMDA_NR2"/>
    <property type="match status" value="1"/>
</dbReference>
<dbReference type="CDD" id="cd13718">
    <property type="entry name" value="PBP2_iGluR_NMDA_Nr2"/>
    <property type="match status" value="1"/>
</dbReference>
<dbReference type="FunFam" id="3.40.190.10:FF:000593">
    <property type="entry name" value="Glutamate ionotropic receptor NMDA type subunit 1"/>
    <property type="match status" value="1"/>
</dbReference>
<dbReference type="FunFam" id="3.40.50.2300:FF:000344">
    <property type="entry name" value="Glutamate ionotropic receptor NMDA type subunit 2A"/>
    <property type="match status" value="1"/>
</dbReference>
<dbReference type="FunFam" id="3.40.50.2300:FF:000020">
    <property type="entry name" value="Glutamate receptor ionotropic, NMDA 2B, putative"/>
    <property type="match status" value="1"/>
</dbReference>
<dbReference type="FunFam" id="3.40.190.10:FF:000007">
    <property type="entry name" value="Putative glutamate receptor ionotropic NMDA 2B"/>
    <property type="match status" value="1"/>
</dbReference>
<dbReference type="FunFam" id="3.40.190.10:FF:000009">
    <property type="entry name" value="Putative glutamate receptor ionotropic NMDA 2B"/>
    <property type="match status" value="1"/>
</dbReference>
<dbReference type="Gene3D" id="3.40.50.2300">
    <property type="match status" value="2"/>
</dbReference>
<dbReference type="Gene3D" id="3.40.190.10">
    <property type="entry name" value="Periplasmic binding protein-like II"/>
    <property type="match status" value="2"/>
</dbReference>
<dbReference type="IDEAL" id="IID00664"/>
<dbReference type="InterPro" id="IPR001828">
    <property type="entry name" value="ANF_lig-bd_rcpt"/>
</dbReference>
<dbReference type="InterPro" id="IPR019594">
    <property type="entry name" value="Glu/Gly-bd"/>
</dbReference>
<dbReference type="InterPro" id="IPR001508">
    <property type="entry name" value="Iono_Glu_rcpt_met"/>
</dbReference>
<dbReference type="InterPro" id="IPR015683">
    <property type="entry name" value="Ionotropic_Glu_rcpt"/>
</dbReference>
<dbReference type="InterPro" id="IPR001320">
    <property type="entry name" value="Iontro_rcpt_C"/>
</dbReference>
<dbReference type="InterPro" id="IPR018884">
    <property type="entry name" value="NMDAR2_C"/>
</dbReference>
<dbReference type="InterPro" id="IPR028082">
    <property type="entry name" value="Peripla_BP_I"/>
</dbReference>
<dbReference type="PANTHER" id="PTHR18966">
    <property type="entry name" value="IONOTROPIC GLUTAMATE RECEPTOR"/>
    <property type="match status" value="1"/>
</dbReference>
<dbReference type="Pfam" id="PF01094">
    <property type="entry name" value="ANF_receptor"/>
    <property type="match status" value="1"/>
</dbReference>
<dbReference type="Pfam" id="PF00060">
    <property type="entry name" value="Lig_chan"/>
    <property type="match status" value="1"/>
</dbReference>
<dbReference type="Pfam" id="PF10613">
    <property type="entry name" value="Lig_chan-Glu_bd"/>
    <property type="match status" value="1"/>
</dbReference>
<dbReference type="Pfam" id="PF10565">
    <property type="entry name" value="NMDAR2_C"/>
    <property type="match status" value="1"/>
</dbReference>
<dbReference type="PRINTS" id="PR00177">
    <property type="entry name" value="NMDARECEPTOR"/>
</dbReference>
<dbReference type="SMART" id="SM00918">
    <property type="entry name" value="Lig_chan-Glu_bd"/>
    <property type="match status" value="1"/>
</dbReference>
<dbReference type="SMART" id="SM00079">
    <property type="entry name" value="PBPe"/>
    <property type="match status" value="1"/>
</dbReference>
<dbReference type="SUPFAM" id="SSF53822">
    <property type="entry name" value="Periplasmic binding protein-like I"/>
    <property type="match status" value="1"/>
</dbReference>
<dbReference type="SUPFAM" id="SSF53850">
    <property type="entry name" value="Periplasmic binding protein-like II"/>
    <property type="match status" value="1"/>
</dbReference>
<proteinExistence type="evidence at protein level"/>
<feature type="signal peptide" evidence="6">
    <location>
        <begin position="1"/>
        <end position="22"/>
    </location>
</feature>
<feature type="chain" id="PRO_0000011573" description="Glutamate receptor ionotropic, NMDA 2A">
    <location>
        <begin position="23"/>
        <end position="1464"/>
    </location>
</feature>
<feature type="topological domain" description="Extracellular" evidence="31 53">
    <location>
        <begin position="23"/>
        <end position="556"/>
    </location>
</feature>
<feature type="transmembrane region" description="Helical" evidence="31 53">
    <location>
        <begin position="557"/>
        <end position="576"/>
    </location>
</feature>
<feature type="topological domain" description="Cytoplasmic" evidence="31 53">
    <location>
        <begin position="577"/>
        <end position="600"/>
    </location>
</feature>
<feature type="intramembrane region" description="Discontinuously helical" evidence="31">
    <location>
        <begin position="601"/>
        <end position="615"/>
    </location>
</feature>
<feature type="topological domain" description="Cytoplasmic" evidence="31 53">
    <location>
        <begin position="616"/>
        <end position="625"/>
    </location>
</feature>
<feature type="transmembrane region" description="Helical" evidence="31 53">
    <location>
        <begin position="626"/>
        <end position="646"/>
    </location>
</feature>
<feature type="topological domain" description="Extracellular" evidence="31 53">
    <location>
        <begin position="647"/>
        <end position="814"/>
    </location>
</feature>
<feature type="transmembrane region" description="Helical" evidence="31 53">
    <location>
        <begin position="815"/>
        <end position="835"/>
    </location>
</feature>
<feature type="topological domain" description="Cytoplasmic" evidence="31 53">
    <location>
        <begin position="836"/>
        <end position="1464"/>
    </location>
</feature>
<feature type="region of interest" description="Pore-forming" evidence="2">
    <location>
        <begin position="599"/>
        <end position="620"/>
    </location>
</feature>
<feature type="region of interest" description="Disordered" evidence="7">
    <location>
        <begin position="997"/>
        <end position="1083"/>
    </location>
</feature>
<feature type="region of interest" description="Disordered" evidence="7">
    <location>
        <begin position="1335"/>
        <end position="1372"/>
    </location>
</feature>
<feature type="short sequence motif" description="PDZ-binding" evidence="41">
    <location>
        <begin position="1462"/>
        <end position="1464"/>
    </location>
</feature>
<feature type="compositionally biased region" description="Polar residues" evidence="7">
    <location>
        <begin position="997"/>
        <end position="1010"/>
    </location>
</feature>
<feature type="compositionally biased region" description="Polar residues" evidence="7">
    <location>
        <begin position="1023"/>
        <end position="1032"/>
    </location>
</feature>
<feature type="compositionally biased region" description="Basic and acidic residues" evidence="7">
    <location>
        <begin position="1033"/>
        <end position="1043"/>
    </location>
</feature>
<feature type="compositionally biased region" description="Basic and acidic residues" evidence="7">
    <location>
        <begin position="1052"/>
        <end position="1061"/>
    </location>
</feature>
<feature type="compositionally biased region" description="Basic and acidic residues" evidence="7">
    <location>
        <begin position="1070"/>
        <end position="1083"/>
    </location>
</feature>
<feature type="binding site" evidence="5">
    <location>
        <position position="44"/>
    </location>
    <ligand>
        <name>Zn(2+)</name>
        <dbReference type="ChEBI" id="CHEBI:29105"/>
        <label>1</label>
        <note>inhibitor</note>
    </ligand>
</feature>
<feature type="binding site" evidence="5">
    <location>
        <position position="128"/>
    </location>
    <ligand>
        <name>Zn(2+)</name>
        <dbReference type="ChEBI" id="CHEBI:29105"/>
        <label>1</label>
        <note>inhibitor</note>
    </ligand>
</feature>
<feature type="binding site" evidence="5">
    <location>
        <position position="266"/>
    </location>
    <ligand>
        <name>Zn(2+)</name>
        <dbReference type="ChEBI" id="CHEBI:29105"/>
        <label>1</label>
        <note>inhibitor</note>
    </ligand>
</feature>
<feature type="binding site" evidence="5">
    <location>
        <position position="282"/>
    </location>
    <ligand>
        <name>Zn(2+)</name>
        <dbReference type="ChEBI" id="CHEBI:29105"/>
        <label>1</label>
        <note>inhibitor</note>
    </ligand>
</feature>
<feature type="binding site" evidence="19 20 25 43 44 45 46 47 48 49 50 51 52">
    <location>
        <position position="511"/>
    </location>
    <ligand>
        <name>L-glutamate</name>
        <dbReference type="ChEBI" id="CHEBI:29985"/>
    </ligand>
</feature>
<feature type="binding site" evidence="19 20 25 43 44 45 46 47 48 49 50 51 52">
    <location>
        <position position="513"/>
    </location>
    <ligand>
        <name>L-glutamate</name>
        <dbReference type="ChEBI" id="CHEBI:29985"/>
    </ligand>
</feature>
<feature type="binding site" evidence="19 20 25 43 44 45 46 47 48 49 50 51 52">
    <location>
        <position position="518"/>
    </location>
    <ligand>
        <name>L-glutamate</name>
        <dbReference type="ChEBI" id="CHEBI:29985"/>
    </ligand>
</feature>
<feature type="binding site" evidence="19 20 25 43 44 45 46 47 48 49 50 51 52">
    <location>
        <position position="689"/>
    </location>
    <ligand>
        <name>L-glutamate</name>
        <dbReference type="ChEBI" id="CHEBI:29985"/>
    </ligand>
</feature>
<feature type="binding site" evidence="19 20 25 43 44 45 46 47 48 49 50 51 52">
    <location>
        <position position="690"/>
    </location>
    <ligand>
        <name>L-glutamate</name>
        <dbReference type="ChEBI" id="CHEBI:29985"/>
    </ligand>
</feature>
<feature type="binding site" evidence="19 20 25 43 44 45 46 47 48 49 50 51">
    <location>
        <position position="731"/>
    </location>
    <ligand>
        <name>L-glutamate</name>
        <dbReference type="ChEBI" id="CHEBI:29985"/>
    </ligand>
</feature>
<feature type="site" description="Functional determinant of NMDA receptors" evidence="1">
    <location>
        <position position="614"/>
    </location>
</feature>
<feature type="modified residue" description="Phosphoserine" evidence="3">
    <location>
        <position position="882"/>
    </location>
</feature>
<feature type="modified residue" description="Phosphoserine" evidence="3">
    <location>
        <position position="890"/>
    </location>
</feature>
<feature type="modified residue" description="Phosphoserine" evidence="3">
    <location>
        <position position="929"/>
    </location>
</feature>
<feature type="modified residue" description="Phosphoserine" evidence="5">
    <location>
        <position position="1025"/>
    </location>
</feature>
<feature type="modified residue" description="Phosphoserine" evidence="3">
    <location>
        <position position="1059"/>
    </location>
</feature>
<feature type="modified residue" description="Phosphoserine" evidence="5">
    <location>
        <position position="1062"/>
    </location>
</feature>
<feature type="modified residue" description="Phosphoserine" evidence="5">
    <location>
        <position position="1198"/>
    </location>
</feature>
<feature type="modified residue" description="Phosphoserine" evidence="5">
    <location>
        <position position="1291"/>
    </location>
</feature>
<feature type="glycosylation site" description="N-linked (GlcNAc...) asparagine" evidence="6">
    <location>
        <position position="75"/>
    </location>
</feature>
<feature type="glycosylation site" description="N-linked (GlcNAc...) asparagine" evidence="6 31 55">
    <location>
        <position position="340"/>
    </location>
</feature>
<feature type="glycosylation site" description="N-linked (GlcNAc...) asparagine" evidence="6">
    <location>
        <position position="380"/>
    </location>
</feature>
<feature type="glycosylation site" description="N-linked (GlcNAc...) asparagine" evidence="6">
    <location>
        <position position="443"/>
    </location>
</feature>
<feature type="glycosylation site" description="N-linked (GlcNAc...) asparagine" evidence="6">
    <location>
        <position position="444"/>
    </location>
</feature>
<feature type="glycosylation site" description="N-linked (GlcNAc...) asparagine" evidence="6">
    <location>
        <position position="541"/>
    </location>
</feature>
<feature type="glycosylation site" description="N-linked (GlcNAc...) asparagine" evidence="6 31 53 54 56 57">
    <location>
        <position position="687"/>
    </location>
</feature>
<feature type="disulfide bond" evidence="5">
    <location>
        <begin position="87"/>
        <end position="320"/>
    </location>
</feature>
<feature type="disulfide bond" evidence="19 20 25 43 44 45 46 47 48 49 50 51 52">
    <location>
        <begin position="429"/>
        <end position="455"/>
    </location>
</feature>
<feature type="disulfide bond" evidence="19 20 25 43 44 45 46 47 48 49 50 51 52">
    <location>
        <begin position="436"/>
        <end position="456"/>
    </location>
</feature>
<feature type="disulfide bond" evidence="5">
    <location>
        <begin position="745"/>
        <end position="800"/>
    </location>
</feature>
<feature type="splice variant" id="VSP_044300" description="In isoform 2." evidence="38">
    <original>NPATGEQVYQQDWAQNNALQLQKNKLRISRQHSYDNIVDKPRELDLSRPSRSISLKDRERLLEGNFYGSLFSVPSSKLSGKKSSLFPQGLEDSKRSKSLLPDHTSDNPFLHSHRDDQRLVIGRCPSDPYKHSLPSQAVNDSYLRSSLRSTASYCSRDSRGHNDVYISEHVMPYAANKNNMYSTPRVLNSCSNRRVYKKMPSIESDV</original>
    <variation>MTNAWLLGDAPRTLTNTRCHPRR</variation>
    <location>
        <begin position="1259"/>
        <end position="1464"/>
    </location>
</feature>
<feature type="sequence variant" id="VAR_067725" description="Found in a cutaneous malignant melanoma sample; somatic mutation." evidence="9">
    <original>P</original>
    <variation>L</variation>
    <location>
        <position position="57"/>
    </location>
</feature>
<feature type="sequence variant" id="VAR_089590" description="Found in schizophrenia; uncertain significance; loss of function in ion transmembrane transport; the channel is not activated by glutamate." evidence="32 34">
    <location>
        <begin position="58"/>
        <end position="1464"/>
    </location>
</feature>
<feature type="sequence variant" id="VAR_070345" description="In FESD; decreased function in ion transmembrane transport when expressed in Xenopus oocytes; decreased localization to cell membrane; mutant channels are less responsive to inhibition by Zn(2+) than wild-type channels; dbSNP:rs1250662891." evidence="13 21 28">
    <original>P</original>
    <variation>R</variation>
    <location>
        <position position="79"/>
    </location>
</feature>
<feature type="sequence variant" id="VAR_079929" description="Found in a patient with autism spectrum disorder; uncertain significance." evidence="10">
    <original>T</original>
    <variation>I</variation>
    <location>
        <position position="143"/>
    </location>
</feature>
<feature type="sequence variant" id="VAR_067726" description="In FESD; uncertain significance; also found in a cutaneous malignant melanoma sample; somatic mutation; no effect on function in ion transmembrane transport when expressed in Xenopus oocytes; has no effect on channel basal gating properties and activation by glutamate and glycine; dbSNP:rs587780353." evidence="9 13 21">
    <original>F</original>
    <variation>I</variation>
    <location>
        <position position="183"/>
    </location>
</feature>
<feature type="sequence variant" id="VAR_070346" description="In FESD; uncertain significance; no effect on function in ion transmembrane transport when expressed in Xenopus oocytes; has no effect on channel basal gating properties and activation by glutamate and glycine." evidence="14 21">
    <original>I</original>
    <variation>S</variation>
    <location>
        <position position="184"/>
    </location>
</feature>
<feature type="sequence variant" id="VAR_079930" description="Found in a patient with schizophrenia; uncertain significance; dbSNP:rs1377082706." evidence="10">
    <original>T</original>
    <variation>N</variation>
    <location>
        <position position="189"/>
    </location>
</feature>
<feature type="sequence variant" id="VAR_070347" description="In FESD; uncertain significance; severely decreased function in ion transmembrane transport when expressed in Xenopus oocytes; decreased localization to cell membrane; changed glutamate-gated calcium ion channel activity characterized by decreased glutamate and glycine potency." evidence="13 21 28">
    <original>C</original>
    <variation>Y</variation>
    <location>
        <position position="231"/>
    </location>
</feature>
<feature type="sequence variant" id="VAR_070348" description="In FESD; no effect on function in ion transmembrane transport when expressed in Xenopus oocytes; has no effect on channel basal gating properties and activation by glutamate and glycine." evidence="13 21">
    <original>A</original>
    <variation>V</variation>
    <location>
        <position position="243"/>
    </location>
</feature>
<feature type="sequence variant" id="VAR_067727" description="Found in a cutaneous malignant melanoma sample; somatic mutation; dbSNP:rs868215122." evidence="9">
    <original>D</original>
    <variation>N</variation>
    <location>
        <position position="252"/>
    </location>
</feature>
<feature type="sequence variant" id="VAR_010938" evidence="36">
    <original>K</original>
    <variation>E</variation>
    <location>
        <position position="270"/>
    </location>
</feature>
<feature type="sequence variant" id="VAR_067728" description="Found in a cutaneous malignant melanoma sample; somatic mutation; dbSNP:rs148531310." evidence="9">
    <original>S</original>
    <variation>F</variation>
    <location>
        <position position="278"/>
    </location>
</feature>
<feature type="sequence variant" id="VAR_070349" description="In FESD; uncertain significance; no effect on function in ion transmembrane transport when expressed in Xenopus oocytes; has no effect on channel basal gating properties and activation by glutamate and glycine; dbSNP:rs199528312." evidence="13 21">
    <original>A</original>
    <variation>V</variation>
    <location>
        <position position="290"/>
    </location>
</feature>
<feature type="sequence variant" id="VAR_070350" description="In FESD; uncertain significance; no effect on function in ion transmembrane transport when expressed in Xenopus oocytes; has no effect on channel basal gating properties and activation by glutamate and glycine; dbSNP:rs568484876." evidence="14 21">
    <original>G</original>
    <variation>S</variation>
    <location>
        <position position="295"/>
    </location>
</feature>
<feature type="sequence variant" id="VAR_079931" description="In dbSNP:rs148511104." evidence="10">
    <original>P</original>
    <variation>S</variation>
    <location>
        <position position="336"/>
    </location>
</feature>
<feature type="sequence variant" id="VAR_071624" description="Found in a cutaneous malignant melanoma sample." evidence="15">
    <original>S</original>
    <variation>F</variation>
    <location>
        <position position="349"/>
    </location>
</feature>
<feature type="sequence variant" id="VAR_070351" description="In FESD; uncertain significance; no effect on function in ion transmembrane transport when expressed in Xenopus oocytes; has no effect on channel basal gating properties and activation by glutamate and glycine; mutant channels are more responsive to inhibition by Zn(2+) than wild-type channels; dbSNP:rs761168789." evidence="13 21">
    <original>R</original>
    <variation>W</variation>
    <location>
        <position position="370"/>
    </location>
</feature>
<feature type="sequence variant" id="VAR_067729" description="Found in a cutaneous malignant melanoma sample; somatic mutation; dbSNP:rs149344082." evidence="9">
    <original>E</original>
    <variation>K</variation>
    <location>
        <position position="371"/>
    </location>
</feature>
<feature type="sequence variant" id="VAR_067730" description="Found in a cutaneous malignant melanoma sample; somatic mutation." evidence="9">
    <original>E</original>
    <variation>K</variation>
    <location>
        <position position="373"/>
    </location>
</feature>
<feature type="sequence variant" id="VAR_078109" description="Found in a patient with neonatal onset epileptic encephalopathy; uncertain significance; dbSNP:rs1057519551." evidence="23">
    <original>N</original>
    <variation>D</variation>
    <location>
        <position position="380"/>
    </location>
</feature>
<feature type="sequence variant" id="VAR_089591" description="In FESD; uncertain significance." evidence="30">
    <original>L</original>
    <variation>Q</variation>
    <location>
        <position position="411"/>
    </location>
</feature>
<feature type="sequence variant" id="VAR_070352" description="In FESD; severely decreased function in ion transmembrane transport when expressed in Xenopus oocytes; severely reduced localization to the cell membrane; changed glutamate-gated calcium ion channel activity characterized by increased glutamate potency and decreased glycine potency; dbSNP:rs1555496111." evidence="13 21 22 28">
    <original>C</original>
    <variation>R</variation>
    <location>
        <position position="436"/>
    </location>
</feature>
<feature type="sequence variant" id="VAR_067731" description="Found in a cutaneous malignant melanoma sample; somatic mutation; dbSNP:rs139033056." evidence="9">
    <original>G</original>
    <variation>E</variation>
    <location>
        <position position="449"/>
    </location>
</feature>
<feature type="sequence variant" id="VAR_079932" description="No effect on localization to the cell membrane; changed glutamate-gated calcium ion channel activity characterized by increased glutamate potency; dbSNP:rs145956175." evidence="10 22">
    <original>V</original>
    <variation>M</variation>
    <location>
        <position position="452"/>
    </location>
</feature>
<feature type="sequence variant" id="VAR_067732" description="Found in a cutaneous malignant melanoma sample; somatic mutation." evidence="9">
    <original>F</original>
    <variation>S</variation>
    <location>
        <position position="459"/>
    </location>
</feature>
<feature type="sequence variant" id="VAR_070353" description="In FESD; decreased protein abundance; decreased localization to the cell membrane; changed glutamate-gated calcium ion channel activity characterized by decreased glutamate potency." evidence="14 22 28">
    <original>G</original>
    <variation>R</variation>
    <location>
        <position position="483"/>
    </location>
</feature>
<feature type="sequence variant" id="VAR_089592" description="In FESD; uncertain significance." evidence="30">
    <original>G</original>
    <variation>S</variation>
    <location>
        <position position="498"/>
    </location>
</feature>
<feature type="sequence variant" id="VAR_070354" description="In FESD; decreased protein abundance; decreased localization to the cell membrane; no significant effect on calcium ion transmembrane import into cytosol; dbSNP:rs1360906241." evidence="14 22">
    <original>R</original>
    <variation>W</variation>
    <location>
        <position position="504"/>
    </location>
</feature>
<feature type="sequence variant" id="VAR_079933" description="In FESD; no effect on localization to the cell membrane; changed glutamate-gated calcium ion channel activity characterized by increased glutamate potency; dbSNP:rs796052543." evidence="22">
    <original>V</original>
    <variation>A</variation>
    <location>
        <position position="506"/>
    </location>
</feature>
<feature type="sequence variant" id="VAR_089593" description="In FESD; likely pathogenic." evidence="30">
    <original>R</original>
    <variation>C</variation>
    <location>
        <position position="518"/>
    </location>
</feature>
<feature type="sequence variant" id="VAR_070355" description="In FESD; decreased protein abundance; decreased localization to the cell membrane; affects glutamate-gated calcium ion channel activity and alters the duration of channel open and closed states; dbSNP:rs397518470." evidence="14 22">
    <original>R</original>
    <variation>H</variation>
    <location>
        <position position="518"/>
    </location>
</feature>
<feature type="sequence variant" id="VAR_070356" description="In FESD; decreased protein abundance; decreased localization to the cell membrane; changed glutamate-gated calcium ion channel activity characterized by affected receptor kinetics; dbSNP:rs397518468." evidence="12 22">
    <original>T</original>
    <variation>M</variation>
    <location>
        <position position="531"/>
    </location>
</feature>
<feature type="sequence variant" id="VAR_089594" description="In FESD; likely pathogenic." evidence="30">
    <original>G</original>
    <variation>V</variation>
    <location>
        <position position="532"/>
    </location>
</feature>
<feature type="sequence variant" id="VAR_070357" description="In FESD." evidence="13">
    <location>
        <position position="547"/>
    </location>
</feature>
<feature type="sequence variant" id="VAR_070358" description="In FESD; no effect on localization to the cell membrane; loss of glutamate-gated calcium ion channel activity." evidence="14 24">
    <original>A</original>
    <variation>T</variation>
    <location>
        <position position="548"/>
    </location>
</feature>
<feature type="sequence variant" id="VAR_069382" description="In FESD; no effect on localization to the cell membrane; results in substantial alterations of channel gating properties; changed glutamate-gated calcium ion channel activity characterized by increased glutamate and glycine potency with delay in rise time and slower deactivation time course; dbSNP:rs397518450." evidence="11 24 33">
    <original>P</original>
    <variation>R</variation>
    <location>
        <position position="552"/>
    </location>
</feature>
<feature type="sequence variant" id="VAR_089595" description="Unchanged function in ion transmembrane transport; unchanged agonist potency and channel activation by glutamate." evidence="34">
    <original>F</original>
    <variation>L</variation>
    <location>
        <position position="576"/>
    </location>
</feature>
<feature type="sequence variant" id="VAR_079934" evidence="10">
    <original>F</original>
    <variation>S</variation>
    <location>
        <position position="576"/>
    </location>
</feature>
<feature type="sequence variant" id="VAR_089596" description="Unchanged function in ion transmembrane transport; unchanged agonist potency and channel activation by glutamate." evidence="34">
    <original>R</original>
    <variation>K</variation>
    <location>
        <position position="586"/>
    </location>
</feature>
<feature type="sequence variant" id="VAR_089597" description="Found in schizophrenia; uncertain significance; unchanged function in ion transmembrane transport; unchanged agonist potency and channel activation by glutamate." evidence="32 34">
    <original>G</original>
    <variation>R</variation>
    <location>
        <position position="591"/>
    </location>
</feature>
<feature type="sequence variant" id="VAR_067733" description="Found in a cutaneous malignant melanoma sample; somatic mutation; dbSNP:rs551688681." evidence="9">
    <original>H</original>
    <variation>R</variation>
    <location>
        <position position="595"/>
    </location>
</feature>
<feature type="sequence variant" id="VAR_067734" description="Found in a cutaneous malignant melanoma sample; somatic mutation." evidence="9">
    <original>S</original>
    <variation>F</variation>
    <location>
        <position position="598"/>
    </location>
</feature>
<feature type="sequence variant" id="VAR_089598" description="Found in schizophrenia; uncertain significance; unchanged function in ion transmembrane transport; unchanged agonist potency and channel activation by glutamate." evidence="32 34">
    <original>I</original>
    <variation>M</variation>
    <location>
        <position position="605"/>
    </location>
</feature>
<feature type="sequence variant" id="VAR_089599" description="In FESD; likely pathogenic." evidence="30">
    <original>L</original>
    <variation>Q</variation>
    <location>
        <position position="611"/>
    </location>
</feature>
<feature type="sequence variant" id="VAR_089600" description="In FESD; likely pathogenic." evidence="30">
    <original>N</original>
    <variation>S</variation>
    <location>
        <position position="614"/>
    </location>
</feature>
<feature type="sequence variant" id="VAR_065899" description="In FESD; likely pathogenic; results in loss of voltage-dependent inhibition by Mg(2+); the mutant receptor has decreased calcium permeability; shows a dominant-negative effect; dbSNP:rs397518447." evidence="8">
    <original>N</original>
    <variation>K</variation>
    <location>
        <position position="615"/>
    </location>
</feature>
<feature type="sequence variant" id="VAR_089601" description="In FESD; likely pathogenic; no effect on localization to the cell membrane; results in increased agonist potency and channel activation at lower glutamate and glycine concentrations compared to wild type channels." evidence="30 35">
    <original>A</original>
    <variation>T</variation>
    <location>
        <position position="635"/>
    </location>
</feature>
<feature type="sequence variant" id="VAR_089602" description="In FESD; uncertain significance; no effect on localization to the cell membrane; results in increased agonist potency and channel activation at lower glutamate and glycine concentrations compared to wild type channels." evidence="35">
    <original>V</original>
    <variation>I</variation>
    <location>
        <position position="639"/>
    </location>
</feature>
<feature type="sequence variant" id="VAR_089603" description="Found in a patient wit developmental delay and intellectual disability; likely pathogenic; decreased localization to the cell membrane; results in increased agonist potency and channel activation at lower glutamate and glycine concentrations compared to wild type channels." evidence="35">
    <original>L</original>
    <variation>M</variation>
    <location>
        <position position="642"/>
    </location>
</feature>
<feature type="sequence variant" id="VAR_089604" description="In FESD; likely pathogenic; decreased localization to the cell membrane; results in increased agonist potency and channel activation at lower glutamate and glycine concentrations compared to wild type channels." evidence="35">
    <original>L</original>
    <variation>R</variation>
    <location>
        <position position="642"/>
    </location>
</feature>
<feature type="sequence variant" id="VAR_089605" description="Found in a patient with a neurodevelopmental disorder without epilepsy; likely pathogenic; decreased localization to the cell membrane; results in increased agonist potency and channel activation at lower glutamate and glycine concentrations compared to wild type channels." evidence="29 35">
    <original>A</original>
    <variation>D</variation>
    <location>
        <position position="643"/>
    </location>
</feature>
<feature type="sequence variant" id="VAR_089606" description="In FESD; likely pathogenic; decreased localization to the cell membrane; results in increased agonist potency and channel activation at lower glutamate and glycine concentrations compared to wild type channels." evidence="30 35">
    <original>S</original>
    <variation>G</variation>
    <location>
        <position position="644"/>
    </location>
</feature>
<feature type="sequence variant" id="VAR_089607" description="In FESD; likely pathogenic; severely decreased localization to the cell membrane; results in increased agonist potency and channel activation at lower glutamate and glycine concentrations compared to wild type channels." evidence="35">
    <original>T</original>
    <variation>A</variation>
    <location>
        <position position="646"/>
    </location>
</feature>
<feature type="sequence variant" id="VAR_089608" description="In FESD; likely pathogenic; decreased localization to the cell membrane; results in increased agonist potency and channel activation at lower glutamate and glycine concentrations compared to wild type channels." evidence="30 35">
    <original>N</original>
    <variation>S</variation>
    <location>
        <position position="648"/>
    </location>
</feature>
<feature type="sequence variant" id="VAR_089609" description="In FESD; likely pathogenic." evidence="30">
    <original>L</original>
    <variation>P</variation>
    <location>
        <position position="649"/>
    </location>
</feature>
<feature type="sequence variant" id="VAR_069383" description="In FESD; likely pathogenic; decreased localization to the cell membrane; results in increased agonist potency and channel activation at lower glutamate and glycine concentrations compared to wild type channels; dbSNP:rs397514557." evidence="11 30 35">
    <original>L</original>
    <variation>V</variation>
    <location>
        <position position="649"/>
    </location>
</feature>
<feature type="sequence variant" id="VAR_089610" description="In FESD; likely pathogenic; decreased localization to the cell membrane." evidence="35">
    <original>A</original>
    <variation>S</variation>
    <location>
        <position position="650"/>
    </location>
</feature>
<feature type="sequence variant" id="VAR_070359" description="In FESD; likely pathogenic; results in increased agonist potency and channel activation at lower glutamate and glycine concentrations compared to wild type channels; results in substantial alterations of channel gating properties and affects duration of channel open and closed states; dbSNP:rs397518471." evidence="14 33 35">
    <original>F</original>
    <variation>V</variation>
    <location>
        <position position="652"/>
    </location>
</feature>
<feature type="sequence variant" id="VAR_067735" description="In FESD; likely pathogenic; also found in a cutaneous malignant melanoma sample; somatic mutation; controversial results on functional consequences; decreased localization to cell membrane according to PubMed:38538865; unchanged localization to cell membrane according to PubMed:38307912; increased agonist potency and channel activation at lower glutamate and glycine concentrations compared to wild type channels according to PubMed:38538865; loss of function in ion transmembrane transport and lack of channel activation by glutamate according to PubMed:38307912." evidence="9 30 34 35">
    <original>M</original>
    <variation>I</variation>
    <location>
        <position position="653"/>
    </location>
</feature>
<feature type="sequence variant" id="VAR_089611" description="In FESD; likely pathogenic; decreased localization to the cell membrane; results in increased agonist potency and channel activation at lower glutamate and glycine concentrations compared to wild type channels." evidence="35">
    <original>M</original>
    <variation>V</variation>
    <location>
        <position position="653"/>
    </location>
</feature>
<feature type="sequence variant" id="VAR_089612" description="In FESD; likely pathogenic; decreased localization to the cell membrane; results in increased agonist potency and channel activation at lower glutamate and glycine concentrations compared to wild type channels." evidence="30 35">
    <original>I</original>
    <variation>T</variation>
    <location>
        <position position="654"/>
    </location>
</feature>
<feature type="sequence variant" id="VAR_070360" description="In FESD; no effect on localization to the cell membrane; changed glutamate-gated calcium ion channel activity characterized by increased glutamate and glycine potency." evidence="14 22">
    <original>K</original>
    <variation>N</variation>
    <location>
        <position position="669"/>
    </location>
</feature>
<feature type="sequence variant" id="VAR_089613" description="Unchanged function in ion transmembrane transport; unchanged agonist potency and channel activation by glutamate." evidence="34">
    <original>Q</original>
    <variation>H</variation>
    <location>
        <position position="671"/>
    </location>
</feature>
<feature type="sequence variant" id="VAR_089614" description="In FESD; likely pathogenic." evidence="30">
    <original>T</original>
    <variation>A</variation>
    <location>
        <position position="684"/>
    </location>
</feature>
<feature type="sequence variant" id="VAR_079935" description="In FESD; decreased protein abundance; decreased localization to the cell membrane; changed glutamate-gated calcium ion channel activity characterized by decreased glutamate potency; dbSNP:rs796052548." evidence="22">
    <original>V</original>
    <variation>G</variation>
    <location>
        <position position="685"/>
    </location>
</feature>
<feature type="sequence variant" id="VAR_070361" description="In FESD; decreased protein abundance; decreased localization to the cell membrane; changed glutamate-gated calcium ion channel activity characterized by decreased glutamate potency and decreased open probability." evidence="14 22">
    <original>I</original>
    <variation>T</variation>
    <location>
        <position position="694"/>
    </location>
</feature>
<feature type="sequence variant" id="VAR_089615" description="In FESD; likely pathogenic." evidence="30">
    <original>R</original>
    <variation>Q</variation>
    <location>
        <position position="695"/>
    </location>
</feature>
<feature type="sequence variant" id="VAR_089616" description="Found in schizophrenia; uncertain significance; decreased function in ion transmembrane transport; decreased agonist potency and channel activation at higher glutamate concentrations compared to wild type channels." evidence="32 34">
    <original>Y</original>
    <variation>C</variation>
    <location>
        <position position="698"/>
    </location>
</feature>
<feature type="sequence variant" id="VAR_070362" description="In FESD; no effect on localization to the cell membrane; changed glutamate-gated calcium ion channel activity characterized by increased glutamate potency and decreased open probability; dbSNP:rs1555491648." evidence="13 22">
    <original>P</original>
    <variation>S</variation>
    <location>
        <position position="699"/>
    </location>
</feature>
<feature type="sequence variant" id="VAR_089617" description="Found in schizophrenia; uncertain significance; loss of function in ion transmembrane transport; the channel is not activated by glutamate." evidence="32 34">
    <location>
        <begin position="700"/>
        <end position="1464"/>
    </location>
</feature>
<feature type="sequence variant" id="VAR_070363" description="In FESD; decreased localization to the cell membrane; changed glutamate-gated calcium ion channel activity characterized by decreased glutamate potency and decreased open probability." evidence="13 22 28">
    <original>M</original>
    <variation>V</variation>
    <location>
        <position position="705"/>
    </location>
</feature>
<feature type="sequence variant" id="VAR_089618" description="Unchanged function in ion transmembrane transport; unchanged agonist potency and unchanged channel activation by glutamate." evidence="34">
    <original>K</original>
    <variation>R</variation>
    <location>
        <position position="707"/>
    </location>
</feature>
<feature type="sequence variant" id="VAR_067736" description="Found in a cutaneous malignant melanoma sample; somatic mutation; dbSNP:rs143031592." evidence="9">
    <original>G</original>
    <variation>E</variation>
    <location>
        <position position="712"/>
    </location>
</feature>
<feature type="sequence variant" id="VAR_089619" description="In FESD; likely pathogenic." evidence="30">
    <original>V</original>
    <variation>G</variation>
    <location>
        <position position="713"/>
    </location>
</feature>
<feature type="sequence variant" id="VAR_070364" description="In FESD; decreased protein abundance; no effect on localization to the cell membrane; no significant effect on calcium ion transmembrane import into cytosol." evidence="13 22 28">
    <original>E</original>
    <variation>K</variation>
    <location>
        <position position="714"/>
    </location>
</feature>
<feature type="sequence variant" id="VAR_078110" description="In FESD; uncertain significance; dbSNP:rs1057519552." evidence="23">
    <original>A</original>
    <variation>D</variation>
    <location>
        <position position="716"/>
    </location>
</feature>
<feature type="sequence variant" id="VAR_070365" description="In FESD; decreased protein abundance; decreased localization to the cell membrane; changed glutamate-gated calcium ion channel activity characterized by decreased glutamate potency; dbSNP:rs762659685." evidence="14 22 30">
    <original>A</original>
    <variation>T</variation>
    <location>
        <position position="716"/>
    </location>
</feature>
<feature type="sequence variant" id="VAR_070366" description="In FESD; decreased protein abundance; decreased localization to the cell membrane; decreased function in ion transmembrane transport; changed glutamate-gated calcium ion channel activity characterized by decreased glutamate potency and decreased open probability; dbSNP:rs1555488144." evidence="13 22 34">
    <original>A</original>
    <variation>T</variation>
    <location>
        <position position="727"/>
    </location>
</feature>
<feature type="sequence variant" id="VAR_089620" description="Unchanged function in ion transmembrane transport; unchanged agonist potency and unchanged channel activation by glutamate." evidence="34">
    <original>A</original>
    <variation>V</variation>
    <location>
        <position position="727"/>
    </location>
</feature>
<feature type="sequence variant" id="VAR_070367" description="In FESD; likely pathogenic; decreased protein abundance; decreased localization to the cell membrane; decreased glutamate-gated calcium ion channel activity characterized by drastically decreased glutamate agonist potency, decreased glycine agonist potency, reduced amplitude of current response, shortened synaptic-like response time course, decreased channel open probability and enhanced sensitivity to negative allosteric modulators; dbSNP:rs796052549." evidence="14 22 27 28 30">
    <original>D</original>
    <variation>N</variation>
    <location>
        <position position="731"/>
    </location>
</feature>
<feature type="sequence variant" id="VAR_089621" description="In FESD; uncertain significance." evidence="30">
    <original>A</original>
    <variation>T</variation>
    <location>
        <position position="733"/>
    </location>
</feature>
<feature type="sequence variant" id="VAR_070368" description="In FESD; no effect on localization to the cell membrane; changed glutamate-gated calcium ion channel activity characterized by decreased glutamate potency." evidence="13 22">
    <original>V</original>
    <variation>L</variation>
    <location>
        <position position="734"/>
    </location>
</feature>
<feature type="sequence variant" id="VAR_067737" description="Found in a cutaneous malignant melanoma sample; somatic mutation." evidence="9">
    <original>G</original>
    <variation>W</variation>
    <location>
        <position position="740"/>
    </location>
</feature>
<feature type="sequence variant" id="VAR_071625" description="Found in a cutaneous malignant melanoma sample." evidence="15">
    <original>G</original>
    <variation>A</variation>
    <location>
        <position position="762"/>
    </location>
</feature>
<feature type="sequence variant" id="VAR_070369" description="In FESD; decreased protein abundance; decreased localization to the cell membrane; changed glutamate-gated calcium ion channel activity characterized by decreased open probability." evidence="13 22">
    <original>K</original>
    <variation>E</variation>
    <location>
        <position position="772"/>
    </location>
</feature>
<feature type="sequence variant" id="VAR_089622" description="Unchanged function in ion transmembrane transport; unchanged agonist potency and unchanged channel activation by glutamate." evidence="34">
    <original>I</original>
    <variation>M</variation>
    <location>
        <position position="775"/>
    </location>
</feature>
<feature type="sequence variant" id="VAR_089623" description="Found in schizophrenia; uncertain significance; unchanged function in ion transmembrane transport; unchanged agonist potency and unchanged channel activation by glutamate." evidence="32 34">
    <original>G</original>
    <variation>A</variation>
    <location>
        <position position="784"/>
    </location>
</feature>
<feature type="sequence variant" id="VAR_089624" description="Found in schizophrenia; uncertain significance; unchanged function in ion transmembrane transport; unchanged agonist potency and unchanged channel activation by glutamate." evidence="32 34">
    <original>M</original>
    <variation>I</variation>
    <location>
        <position position="788"/>
    </location>
</feature>
<feature type="sequence variant" id="VAR_089625" description="Found in schizophrenia; uncertain significance; unchanged function in ion transmembrane transport; unchanged agonist potency and unchanged channel activation by glutamate." evidence="32 34">
    <original>L</original>
    <variation>M</variation>
    <location>
        <position position="794"/>
    </location>
</feature>
<feature type="sequence variant" id="VAR_089626" description="In FESD; likely pathogenic; loss of function in ion transmembrane transport; the channel is not activated by glutamate." evidence="30 34">
    <original>S</original>
    <variation>R</variation>
    <location>
        <position position="809"/>
    </location>
</feature>
<feature type="sequence variant" id="VAR_089627" description="Found in schizophrenia; uncertain significance; results in 5-fold decrease in agonist potency and channel activation at increased glutamate concentrations compared to wild type channels." evidence="32 34">
    <original>Q</original>
    <variation>P</variation>
    <location>
        <position position="811"/>
    </location>
</feature>
<feature type="sequence variant" id="VAR_072750" description="In FESD; results in increased agonist potency and channel activation at lower glutamate concentrations compared to wild type channels; decrease in the actions of endogenous negative modulators; increase in channel open probability; prolonged deactivation time course." evidence="16 34">
    <original>L</original>
    <variation>M</variation>
    <location>
        <position position="812"/>
    </location>
</feature>
<feature type="sequence variant" id="VAR_070370" description="In FESD; uncertain significance; no effect on localization to cell membrane; dbSNP:rs780654733." evidence="13 28">
    <original>I</original>
    <variation>T</variation>
    <location>
        <position position="814"/>
    </location>
</feature>
<feature type="sequence variant" id="VAR_071626" description="In FESD; pathogenic; gain-of-function characterized by enhanced agonist potency, reduced sensitivity to endogenous negative inhibitors, prolonged synaptic-like response time course, increased single-channel mean open time and increased channel open probability; dbSNP:rs796052551." evidence="17 26 30">
    <original>M</original>
    <variation>V</variation>
    <location>
        <position position="817"/>
    </location>
</feature>
<feature type="sequence variant" id="VAR_089628" description="In FESD; likely pathogenic." evidence="30">
    <original>A</original>
    <variation>E</variation>
    <location>
        <position position="818"/>
    </location>
</feature>
<feature type="sequence variant" id="VAR_079936" description="In dbSNP:rs150316865." evidence="10">
    <original>V</original>
    <variation>M</variation>
    <location>
        <position position="852"/>
    </location>
</feature>
<feature type="sequence variant" id="VAR_078690" description="Found in a patient with autism; uncertain significance; dbSNP:rs777684328." evidence="18">
    <original>D</original>
    <variation>N</variation>
    <location>
        <position position="884"/>
    </location>
</feature>
<feature type="sequence variant" id="VAR_067738" description="Found in a cutaneous malignant melanoma sample; somatic mutation." evidence="9 15">
    <original>G</original>
    <variation>E</variation>
    <location>
        <position position="889"/>
    </location>
</feature>
<feature type="sequence variant" id="VAR_070371" description="In FESD; dbSNP:rs1555482933." evidence="13">
    <original>I</original>
    <variation>F</variation>
    <location>
        <position position="904"/>
    </location>
</feature>
<feature type="sequence variant" id="VAR_067739" description="Found in a cutaneous malignant melanoma sample; somatic mutation." evidence="9">
    <original>R</original>
    <variation>K</variation>
    <location>
        <position position="920"/>
    </location>
</feature>
<feature type="sequence variant" id="VAR_079937" description="In dbSNP:rs200037904." evidence="10">
    <original>A</original>
    <variation>V</variation>
    <location>
        <position position="922"/>
    </location>
</feature>
<feature type="sequence variant" id="VAR_067740" description="Found in a cutaneous malignant melanoma sample; somatic mutation; dbSNP:rs767268773." evidence="9">
    <original>S</original>
    <variation>F</variation>
    <location>
        <position position="929"/>
    </location>
</feature>
<feature type="sequence variant" id="VAR_070372" description="In FESD; uncertain significance; no effect on localization to cell membrane; dbSNP:rs933322445." evidence="14 28">
    <original>D</original>
    <variation>N</variation>
    <location>
        <position position="933"/>
    </location>
</feature>
<feature type="sequence variant" id="VAR_079938" description="In dbSNP:rs769602505." evidence="10">
    <original>D</original>
    <variation>N</variation>
    <location>
        <position position="937"/>
    </location>
</feature>
<feature type="sequence variant" id="VAR_067741" description="Found in a cutaneous malignant melanoma sample; somatic mutation; dbSNP:rs765370528." evidence="9">
    <original>E</original>
    <variation>K</variation>
    <location>
        <position position="962"/>
    </location>
</feature>
<feature type="sequence variant" id="VAR_089629" description="Unchanged agonist potency and channel activation by glutamate." evidence="34">
    <original>V</original>
    <variation>L</variation>
    <location>
        <position position="967"/>
    </location>
</feature>
<feature type="sequence variant" id="VAR_079939" description="Found in a patient with schizophrenia; uncertain significance." evidence="10">
    <original>A</original>
    <variation>T</variation>
    <location>
        <position position="968"/>
    </location>
</feature>
<feature type="sequence variant" id="VAR_070373" description="In FESD; no effect on localization to cell membrane; dbSNP:rs886039239." evidence="13 28">
    <original>N</original>
    <variation>S</variation>
    <location>
        <position position="976"/>
    </location>
</feature>
<feature type="sequence variant" id="VAR_078111" description="Found in a patient with neonatal onset epileptic encephalopathy; uncertain significance; dbSNP:rs531782747." evidence="23">
    <original>N</original>
    <variation>S</variation>
    <location>
        <position position="989"/>
    </location>
</feature>
<feature type="sequence variant" id="VAR_079940" description="Found in a patient with schizophrenia; uncertain significance; dbSNP:rs1258974659." evidence="10">
    <original>V</original>
    <variation>M</variation>
    <location>
        <position position="998"/>
    </location>
</feature>
<feature type="sequence variant" id="VAR_079941" description="In dbSNP:rs138809301." evidence="10">
    <original>T</original>
    <variation>A</variation>
    <location>
        <position position="1064"/>
    </location>
</feature>
<feature type="sequence variant" id="VAR_067742" description="Found in a cutaneous malignant melanoma sample; somatic mutation." evidence="9">
    <original>E</original>
    <variation>K</variation>
    <location>
        <position position="1073"/>
    </location>
</feature>
<feature type="sequence variant" id="VAR_067743" description="Found in a cutaneous malignant melanoma sample; somatic mutation; dbSNP:rs867432846." evidence="9">
    <original>P</original>
    <variation>L</variation>
    <location>
        <position position="1074"/>
    </location>
</feature>
<feature type="sequence variant" id="VAR_071627" description="Found in a cutaneous malignant melanoma sample." evidence="15">
    <original>P</original>
    <variation>L</variation>
    <location>
        <position position="1132"/>
    </location>
</feature>
<feature type="sequence variant" id="VAR_071628" description="Found in a cutaneous malignant melanoma sample." evidence="15">
    <original>P</original>
    <variation>S</variation>
    <location>
        <position position="1133"/>
    </location>
</feature>
<feature type="sequence variant" id="VAR_067744" description="Found in a cutaneous malignant melanoma sample; somatic mutation; dbSNP:rs267604687." evidence="9">
    <original>D</original>
    <variation>N</variation>
    <location>
        <position position="1153"/>
    </location>
</feature>
<feature type="sequence variant" id="VAR_067745" description="Found in a cutaneous malignant melanoma sample; somatic mutation; dbSNP:rs867464241." evidence="9">
    <original>E</original>
    <variation>K</variation>
    <location>
        <position position="1175"/>
    </location>
</feature>
<feature type="sequence variant" id="VAR_079942" description="Found in a patient with schizophrenia; uncertain significance; dbSNP:rs747136651." evidence="10">
    <original>T</original>
    <variation>S</variation>
    <location>
        <position position="1229"/>
    </location>
</feature>
<feature type="sequence variant" id="VAR_070374" description="In FESD." evidence="14">
    <original>D</original>
    <variation>N</variation>
    <location>
        <position position="1251"/>
    </location>
</feature>
<feature type="sequence variant" id="VAR_067746" description="Found in a patient with continuous spike-wave discharges during slow-wave sleep; uncertain significance; also found in a patient with drug-resistant focal epilepsy; uncertain significance; also found in a cutaneous malignant melanoma sample as somatic mutation; uncertain significance; dbSNP:rs145063086." evidence="9 10 14 23">
    <original>A</original>
    <variation>G</variation>
    <location>
        <position position="1276"/>
    </location>
</feature>
<feature type="sequence variant" id="VAR_067747" description="Found in a cutaneous malignant melanoma sample; somatic mutation; dbSNP:rs367543132." evidence="9">
    <original>R</original>
    <variation>K</variation>
    <location>
        <position position="1285"/>
    </location>
</feature>
<feature type="sequence variant" id="VAR_089630" description="Found in schizophrenia; uncertain significance; unchanged agonist potency and channel activation by glutamate." evidence="32 34">
    <original>I</original>
    <variation>T</variation>
    <location>
        <position position="1295"/>
    </location>
</feature>
<feature type="sequence variant" id="VAR_067748" description="Found in a cutaneous malignant melanoma sample; somatic mutation; dbSNP:rs774419037." evidence="9">
    <original>R</original>
    <variation>W</variation>
    <location>
        <position position="1318"/>
    </location>
</feature>
<feature type="sequence variant" id="VAR_089631" description="Unchanged agonist potency and channel activation by glutamate." evidence="34">
    <location>
        <begin position="1339"/>
        <end position="1464"/>
    </location>
</feature>
<feature type="sequence variant" id="VAR_067749" description="Found in a cutaneous malignant melanoma sample; somatic mutation." evidence="9">
    <original>P</original>
    <variation>L</variation>
    <location>
        <position position="1366"/>
    </location>
</feature>
<feature type="sequence variant" id="VAR_067750" description="Found in a cutaneous malignant melanoma sample; somatic mutation." evidence="9">
    <original>D</original>
    <variation>N</variation>
    <location>
        <position position="1421"/>
    </location>
</feature>
<feature type="sequence variant" id="VAR_067751" description="Found in a cutaneous malignant melanoma sample; somatic mutation; dbSNP:rs976259560." evidence="9">
    <original>S</original>
    <variation>L</variation>
    <location>
        <position position="1425"/>
    </location>
</feature>
<feature type="sequence variant" id="VAR_067752" description="Found in a cutaneous malignant melanoma sample; somatic mutation; dbSNP:rs138415164." evidence="9">
    <original>E</original>
    <variation>K</variation>
    <location>
        <position position="1426"/>
    </location>
</feature>
<feature type="sequence variant" id="VAR_067753" description="Found in a cutaneous malignant melanoma sample; somatic mutation." evidence="9">
    <original>S</original>
    <variation>C</variation>
    <location>
        <position position="1462"/>
    </location>
</feature>
<feature type="mutagenesis site" description="Changed glutamate-gated calcium ion channel activity characterized by increased desensitization." evidence="24">
    <original>P</original>
    <variation>A</variation>
    <location>
        <position position="552"/>
    </location>
</feature>
<feature type="mutagenesis site" description="Changed glutamate-gated calcium ion channel activity characterized by accelerated response activation time and increased desensitization." evidence="24">
    <original>P</original>
    <variation>G</variation>
    <location>
        <position position="552"/>
    </location>
</feature>
<feature type="mutagenesis site" description="Changed glutamate-gated calcium ion channel activity characterized by increased desensitization." evidence="24">
    <original>P</original>
    <variation>I</variation>
    <location>
        <position position="552"/>
    </location>
</feature>
<feature type="mutagenesis site" description="Changed glutamate-gated calcium ion channel activity characterized by increased glutamate and glycine potency with delay in rise time and slower deactivation time course." evidence="24">
    <original>P</original>
    <variation>K</variation>
    <location>
        <position position="552"/>
    </location>
</feature>
<feature type="mutagenesis site" description="No effect on localization to the cell membrane. Changed glutamate-gated calcium ion channel activity characterized by increased desensitization." evidence="24">
    <original>P</original>
    <variation>L</variation>
    <location>
        <position position="552"/>
    </location>
</feature>
<feature type="mutagenesis site" description="No effect on localization to the cell membrane. Changed glutamate-gated calcium ion channel activity characterized by decreased response amplitude and changed desensitization without effect on response rise time or deactivation time course." evidence="24">
    <original>P</original>
    <variation>Q</variation>
    <location>
        <position position="552"/>
    </location>
</feature>
<feature type="mutagenesis site" description="No effect on localization to the cell membrane. No effect on agonist potency and channel activation by glutamate and glycine." evidence="35">
    <original>S</original>
    <variation>F</variation>
    <location>
        <position position="632"/>
    </location>
</feature>
<feature type="mutagenesis site" description="No effect on localization to the cell membrane. Results in increased glycine potency and channel activation at lower agonist concentrations." evidence="35">
    <original>T</original>
    <variation>R</variation>
    <location>
        <position position="646"/>
    </location>
</feature>
<feature type="strand" evidence="63">
    <location>
        <begin position="35"/>
        <end position="40"/>
    </location>
</feature>
<feature type="strand" evidence="63">
    <location>
        <begin position="42"/>
        <end position="44"/>
    </location>
</feature>
<feature type="helix" evidence="63">
    <location>
        <begin position="48"/>
        <end position="54"/>
    </location>
</feature>
<feature type="strand" evidence="63">
    <location>
        <begin position="68"/>
        <end position="73"/>
    </location>
</feature>
<feature type="helix" evidence="63">
    <location>
        <begin position="79"/>
        <end position="91"/>
    </location>
</feature>
<feature type="helix" evidence="63">
    <location>
        <begin position="92"/>
        <end position="94"/>
    </location>
</feature>
<feature type="strand" evidence="63">
    <location>
        <begin position="98"/>
        <end position="101"/>
    </location>
</feature>
<feature type="helix" evidence="63">
    <location>
        <begin position="108"/>
        <end position="120"/>
    </location>
</feature>
<feature type="strand" evidence="63">
    <location>
        <begin position="124"/>
        <end position="126"/>
    </location>
</feature>
<feature type="helix" evidence="63">
    <location>
        <begin position="129"/>
        <end position="132"/>
    </location>
</feature>
<feature type="strand" evidence="63">
    <location>
        <begin position="144"/>
        <end position="148"/>
    </location>
</feature>
<feature type="helix" evidence="63">
    <location>
        <begin position="151"/>
        <end position="164"/>
    </location>
</feature>
<feature type="strand" evidence="63">
    <location>
        <begin position="171"/>
        <end position="176"/>
    </location>
</feature>
<feature type="helix" evidence="63">
    <location>
        <begin position="180"/>
        <end position="192"/>
    </location>
</feature>
<feature type="strand" evidence="63">
    <location>
        <begin position="204"/>
        <end position="208"/>
    </location>
</feature>
<feature type="helix" evidence="63">
    <location>
        <begin position="215"/>
        <end position="219"/>
    </location>
</feature>
<feature type="strand" evidence="63">
    <location>
        <begin position="224"/>
        <end position="230"/>
    </location>
</feature>
<feature type="helix" evidence="63">
    <location>
        <begin position="233"/>
        <end position="244"/>
    </location>
</feature>
<feature type="turn" evidence="63">
    <location>
        <begin position="245"/>
        <end position="247"/>
    </location>
</feature>
<feature type="strand" evidence="63">
    <location>
        <begin position="254"/>
        <end position="257"/>
    </location>
</feature>
<feature type="helix" evidence="63">
    <location>
        <begin position="259"/>
        <end position="261"/>
    </location>
</feature>
<feature type="strand" evidence="63">
    <location>
        <begin position="277"/>
        <end position="280"/>
    </location>
</feature>
<feature type="strand" evidence="63">
    <location>
        <begin position="283"/>
        <end position="286"/>
    </location>
</feature>
<feature type="helix" evidence="63">
    <location>
        <begin position="288"/>
        <end position="309"/>
    </location>
</feature>
<feature type="helix" evidence="63">
    <location>
        <begin position="335"/>
        <end position="339"/>
    </location>
</feature>
<feature type="strand" evidence="63">
    <location>
        <begin position="352"/>
        <end position="354"/>
    </location>
</feature>
<feature type="strand" evidence="63">
    <location>
        <begin position="356"/>
        <end position="358"/>
    </location>
</feature>
<feature type="strand" evidence="63">
    <location>
        <begin position="362"/>
        <end position="366"/>
    </location>
</feature>
<feature type="strand" evidence="63">
    <location>
        <begin position="372"/>
        <end position="377"/>
    </location>
</feature>
<feature type="strand" evidence="63">
    <location>
        <begin position="380"/>
        <end position="382"/>
    </location>
</feature>
<feature type="strand" evidence="59">
    <location>
        <begin position="405"/>
        <end position="410"/>
    </location>
</feature>
<feature type="turn" evidence="59">
    <location>
        <begin position="414"/>
        <end position="416"/>
    </location>
</feature>
<feature type="strand" evidence="59">
    <location>
        <begin position="417"/>
        <end position="421"/>
    </location>
</feature>
<feature type="turn" evidence="62">
    <location>
        <begin position="424"/>
        <end position="426"/>
    </location>
</feature>
<feature type="strand" evidence="59">
    <location>
        <begin position="434"/>
        <end position="442"/>
    </location>
</feature>
<feature type="strand" evidence="59">
    <location>
        <begin position="449"/>
        <end position="458"/>
    </location>
</feature>
<feature type="helix" evidence="59">
    <location>
        <begin position="459"/>
        <end position="471"/>
    </location>
</feature>
<feature type="strand" evidence="59">
    <location>
        <begin position="474"/>
        <end position="479"/>
    </location>
</feature>
<feature type="strand" evidence="59">
    <location>
        <begin position="482"/>
        <end position="485"/>
    </location>
</feature>
<feature type="strand" evidence="60">
    <location>
        <begin position="487"/>
        <end position="489"/>
    </location>
</feature>
<feature type="strand" evidence="60">
    <location>
        <begin position="492"/>
        <end position="494"/>
    </location>
</feature>
<feature type="helix" evidence="59">
    <location>
        <begin position="495"/>
        <end position="501"/>
    </location>
</feature>
<feature type="strand" evidence="59">
    <location>
        <begin position="506"/>
        <end position="508"/>
    </location>
</feature>
<feature type="helix" evidence="59">
    <location>
        <begin position="516"/>
        <end position="519"/>
    </location>
</feature>
<feature type="strand" evidence="59">
    <location>
        <begin position="522"/>
        <end position="524"/>
    </location>
</feature>
<feature type="strand" evidence="59">
    <location>
        <begin position="528"/>
        <end position="538"/>
    </location>
</feature>
<feature type="helix" evidence="63">
    <location>
        <begin position="556"/>
        <end position="577"/>
    </location>
</feature>
<feature type="helix" evidence="63">
    <location>
        <begin position="600"/>
        <end position="613"/>
    </location>
</feature>
<feature type="helix" evidence="63">
    <location>
        <begin position="625"/>
        <end position="654"/>
    </location>
</feature>
<feature type="helix" evidence="59">
    <location>
        <begin position="668"/>
        <end position="671"/>
    </location>
</feature>
<feature type="helix" evidence="59">
    <location>
        <begin position="673"/>
        <end position="675"/>
    </location>
</feature>
<feature type="strand" evidence="59">
    <location>
        <begin position="676"/>
        <end position="678"/>
    </location>
</feature>
<feature type="strand" evidence="63">
    <location>
        <begin position="682"/>
        <end position="684"/>
    </location>
</feature>
<feature type="strand" evidence="60">
    <location>
        <begin position="686"/>
        <end position="688"/>
    </location>
</feature>
<feature type="helix" evidence="59">
    <location>
        <begin position="689"/>
        <end position="697"/>
    </location>
</feature>
<feature type="helix" evidence="59">
    <location>
        <begin position="699"/>
        <end position="705"/>
    </location>
</feature>
<feature type="helix" evidence="59">
    <location>
        <begin position="706"/>
        <end position="708"/>
    </location>
</feature>
<feature type="helix" evidence="59">
    <location>
        <begin position="713"/>
        <end position="721"/>
    </location>
</feature>
<feature type="strand" evidence="59">
    <location>
        <begin position="726"/>
        <end position="731"/>
    </location>
</feature>
<feature type="helix" evidence="59">
    <location>
        <begin position="732"/>
        <end position="740"/>
    </location>
</feature>
<feature type="helix" evidence="61">
    <location>
        <begin position="743"/>
        <end position="745"/>
    </location>
</feature>
<feature type="strand" evidence="59">
    <location>
        <begin position="747"/>
        <end position="750"/>
    </location>
</feature>
<feature type="turn" evidence="59">
    <location>
        <begin position="751"/>
        <end position="753"/>
    </location>
</feature>
<feature type="strand" evidence="59">
    <location>
        <begin position="756"/>
        <end position="761"/>
    </location>
</feature>
<feature type="strand" evidence="60">
    <location>
        <begin position="764"/>
        <end position="766"/>
    </location>
</feature>
<feature type="helix" evidence="59">
    <location>
        <begin position="772"/>
        <end position="784"/>
    </location>
</feature>
<feature type="helix" evidence="59">
    <location>
        <begin position="787"/>
        <end position="795"/>
    </location>
</feature>
<feature type="helix" evidence="63">
    <location>
        <begin position="799"/>
        <end position="802"/>
    </location>
</feature>
<feature type="turn" evidence="63">
    <location>
        <begin position="814"/>
        <end position="817"/>
    </location>
</feature>
<feature type="helix" evidence="63">
    <location>
        <begin position="818"/>
        <end position="840"/>
    </location>
</feature>
<feature type="strand" evidence="58">
    <location>
        <begin position="1461"/>
        <end position="1464"/>
    </location>
</feature>
<name>NMDE1_HUMAN</name>
<organism>
    <name type="scientific">Homo sapiens</name>
    <name type="common">Human</name>
    <dbReference type="NCBI Taxonomy" id="9606"/>
    <lineage>
        <taxon>Eukaryota</taxon>
        <taxon>Metazoa</taxon>
        <taxon>Chordata</taxon>
        <taxon>Craniata</taxon>
        <taxon>Vertebrata</taxon>
        <taxon>Euteleostomi</taxon>
        <taxon>Mammalia</taxon>
        <taxon>Eutheria</taxon>
        <taxon>Euarchontoglires</taxon>
        <taxon>Primates</taxon>
        <taxon>Haplorrhini</taxon>
        <taxon>Catarrhini</taxon>
        <taxon>Hominidae</taxon>
        <taxon>Homo</taxon>
    </lineage>
</organism>
<keyword id="KW-0002">3D-structure</keyword>
<keyword id="KW-0025">Alternative splicing</keyword>
<keyword id="KW-0106">Calcium</keyword>
<keyword id="KW-1003">Cell membrane</keyword>
<keyword id="KW-0966">Cell projection</keyword>
<keyword id="KW-0160">Chromosomal rearrangement</keyword>
<keyword id="KW-0968">Cytoplasmic vesicle</keyword>
<keyword id="KW-0225">Disease variant</keyword>
<keyword id="KW-1015">Disulfide bond</keyword>
<keyword id="KW-0887">Epilepsy</keyword>
<keyword id="KW-0325">Glycoprotein</keyword>
<keyword id="KW-0407">Ion channel</keyword>
<keyword id="KW-0406">Ion transport</keyword>
<keyword id="KW-1071">Ligand-gated ion channel</keyword>
<keyword id="KW-0460">Magnesium</keyword>
<keyword id="KW-0472">Membrane</keyword>
<keyword id="KW-0479">Metal-binding</keyword>
<keyword id="KW-0597">Phosphoprotein</keyword>
<keyword id="KW-0628">Postsynaptic cell membrane</keyword>
<keyword id="KW-1267">Proteomics identification</keyword>
<keyword id="KW-0675">Receptor</keyword>
<keyword id="KW-1185">Reference proteome</keyword>
<keyword id="KW-0732">Signal</keyword>
<keyword id="KW-0770">Synapse</keyword>
<keyword id="KW-0812">Transmembrane</keyword>
<keyword id="KW-1133">Transmembrane helix</keyword>
<keyword id="KW-0813">Transport</keyword>
<keyword id="KW-0862">Zinc</keyword>
<reference key="1">
    <citation type="journal article" date="1994" name="Biochim. Biophys. Acta">
        <title>Human N-methyl-D-aspartate receptor modulatory subunit hNR2A: cloning and sequencing of the cDNA and primary structure of the protein.</title>
        <authorList>
            <person name="Foldes R.L."/>
            <person name="Adams S.L."/>
            <person name="Fantaske R.P."/>
            <person name="Kamboj R.K."/>
        </authorList>
    </citation>
    <scope>NUCLEOTIDE SEQUENCE [MRNA] (ISOFORM 1)</scope>
    <scope>VARIANT GLU-270</scope>
</reference>
<reference key="2">
    <citation type="journal article" date="1996" name="J. Pharmacol. Exp. Ther.">
        <title>Cloning and functional characterization of human heteromeric N-methyl-D-aspartate receptors.</title>
        <authorList>
            <person name="Hess S.D."/>
            <person name="Daggett L.P."/>
            <person name="Crona J."/>
            <person name="Deal C."/>
            <person name="Lu C.-C."/>
            <person name="Urrutia A."/>
            <person name="Chavez-Noriega L."/>
            <person name="Ellis S.B."/>
            <person name="Johnson E.C."/>
            <person name="Velicelebi G."/>
        </authorList>
    </citation>
    <scope>NUCLEOTIDE SEQUENCE [MRNA] (ISOFORM 1)</scope>
    <scope>FUNCTION</scope>
    <scope>TRANSPORTER ACTIVITY</scope>
    <scope>ACTIVITY REGULATION</scope>
    <scope>SUBCELLULAR LOCATION</scope>
    <scope>SUBUNIT</scope>
    <source>
        <tissue>Cerebellum</tissue>
    </source>
</reference>
<reference key="3">
    <citation type="journal article" date="2004" name="Nature">
        <title>The sequence and analysis of duplication-rich human chromosome 16.</title>
        <authorList>
            <person name="Martin J."/>
            <person name="Han C."/>
            <person name="Gordon L.A."/>
            <person name="Terry A."/>
            <person name="Prabhakar S."/>
            <person name="She X."/>
            <person name="Xie G."/>
            <person name="Hellsten U."/>
            <person name="Chan Y.M."/>
            <person name="Altherr M."/>
            <person name="Couronne O."/>
            <person name="Aerts A."/>
            <person name="Bajorek E."/>
            <person name="Black S."/>
            <person name="Blumer H."/>
            <person name="Branscomb E."/>
            <person name="Brown N.C."/>
            <person name="Bruno W.J."/>
            <person name="Buckingham J.M."/>
            <person name="Callen D.F."/>
            <person name="Campbell C.S."/>
            <person name="Campbell M.L."/>
            <person name="Campbell E.W."/>
            <person name="Caoile C."/>
            <person name="Challacombe J.F."/>
            <person name="Chasteen L.A."/>
            <person name="Chertkov O."/>
            <person name="Chi H.C."/>
            <person name="Christensen M."/>
            <person name="Clark L.M."/>
            <person name="Cohn J.D."/>
            <person name="Denys M."/>
            <person name="Detter J.C."/>
            <person name="Dickson M."/>
            <person name="Dimitrijevic-Bussod M."/>
            <person name="Escobar J."/>
            <person name="Fawcett J.J."/>
            <person name="Flowers D."/>
            <person name="Fotopulos D."/>
            <person name="Glavina T."/>
            <person name="Gomez M."/>
            <person name="Gonzales E."/>
            <person name="Goodstein D."/>
            <person name="Goodwin L.A."/>
            <person name="Grady D.L."/>
            <person name="Grigoriev I."/>
            <person name="Groza M."/>
            <person name="Hammon N."/>
            <person name="Hawkins T."/>
            <person name="Haydu L."/>
            <person name="Hildebrand C.E."/>
            <person name="Huang W."/>
            <person name="Israni S."/>
            <person name="Jett J."/>
            <person name="Jewett P.B."/>
            <person name="Kadner K."/>
            <person name="Kimball H."/>
            <person name="Kobayashi A."/>
            <person name="Krawczyk M.-C."/>
            <person name="Leyba T."/>
            <person name="Longmire J.L."/>
            <person name="Lopez F."/>
            <person name="Lou Y."/>
            <person name="Lowry S."/>
            <person name="Ludeman T."/>
            <person name="Manohar C.F."/>
            <person name="Mark G.A."/>
            <person name="McMurray K.L."/>
            <person name="Meincke L.J."/>
            <person name="Morgan J."/>
            <person name="Moyzis R.K."/>
            <person name="Mundt M.O."/>
            <person name="Munk A.C."/>
            <person name="Nandkeshwar R.D."/>
            <person name="Pitluck S."/>
            <person name="Pollard M."/>
            <person name="Predki P."/>
            <person name="Parson-Quintana B."/>
            <person name="Ramirez L."/>
            <person name="Rash S."/>
            <person name="Retterer J."/>
            <person name="Ricke D.O."/>
            <person name="Robinson D.L."/>
            <person name="Rodriguez A."/>
            <person name="Salamov A."/>
            <person name="Saunders E.H."/>
            <person name="Scott D."/>
            <person name="Shough T."/>
            <person name="Stallings R.L."/>
            <person name="Stalvey M."/>
            <person name="Sutherland R.D."/>
            <person name="Tapia R."/>
            <person name="Tesmer J.G."/>
            <person name="Thayer N."/>
            <person name="Thompson L.S."/>
            <person name="Tice H."/>
            <person name="Torney D.C."/>
            <person name="Tran-Gyamfi M."/>
            <person name="Tsai M."/>
            <person name="Ulanovsky L.E."/>
            <person name="Ustaszewska A."/>
            <person name="Vo N."/>
            <person name="White P.S."/>
            <person name="Williams A.L."/>
            <person name="Wills P.L."/>
            <person name="Wu J.-R."/>
            <person name="Wu K."/>
            <person name="Yang J."/>
            <person name="DeJong P."/>
            <person name="Bruce D."/>
            <person name="Doggett N.A."/>
            <person name="Deaven L."/>
            <person name="Schmutz J."/>
            <person name="Grimwood J."/>
            <person name="Richardson P."/>
            <person name="Rokhsar D.S."/>
            <person name="Eichler E.E."/>
            <person name="Gilna P."/>
            <person name="Lucas S.M."/>
            <person name="Myers R.M."/>
            <person name="Rubin E.M."/>
            <person name="Pennacchio L.A."/>
        </authorList>
    </citation>
    <scope>NUCLEOTIDE SEQUENCE [LARGE SCALE GENOMIC DNA]</scope>
</reference>
<reference key="4">
    <citation type="journal article" date="2004" name="Genome Res.">
        <title>The status, quality, and expansion of the NIH full-length cDNA project: the Mammalian Gene Collection (MGC).</title>
        <authorList>
            <consortium name="The MGC Project Team"/>
        </authorList>
    </citation>
    <scope>NUCLEOTIDE SEQUENCE [LARGE SCALE MRNA] (ISOFORM 2)</scope>
    <source>
        <tissue>Brain</tissue>
    </source>
</reference>
<reference evidence="47 48 50" key="5">
    <citation type="journal article" date="2016" name="J. Med. Chem.">
        <title>Discovery of GluN2A-Selective NMDA Receptor Positive Allosteric Modulators (PAMs): Tuning Deactivation Kinetics via Structure-Based Design.</title>
        <authorList>
            <person name="Volgraf M."/>
            <person name="Sellers B.D."/>
            <person name="Jiang Y."/>
            <person name="Wu G."/>
            <person name="Ly C.Q."/>
            <person name="Villemure E."/>
            <person name="Pastor R.M."/>
            <person name="Yuen P.W."/>
            <person name="Lu A."/>
            <person name="Luo X."/>
            <person name="Liu M."/>
            <person name="Zhang S."/>
            <person name="Sun L."/>
            <person name="Fu Y."/>
            <person name="Lupardus P.J."/>
            <person name="Wallweber H.J."/>
            <person name="Liederer B.M."/>
            <person name="Deshmukh G."/>
            <person name="Plise E."/>
            <person name="Tay S."/>
            <person name="Reynen P."/>
            <person name="Herrington J."/>
            <person name="Gustafson A."/>
            <person name="Liu Y."/>
            <person name="Dirksen A."/>
            <person name="Dietz M.G."/>
            <person name="Liu Y."/>
            <person name="Wang T.M."/>
            <person name="Hanson J.E."/>
            <person name="Hackos D."/>
            <person name="Scearce-Levie K."/>
            <person name="Schwarz J.B."/>
        </authorList>
    </citation>
    <scope>X-RAY CRYSTALLOGRAPHY (2.12 ANGSTROMS) OF 401-539 AND 566-800 IN COMPLEX WITH GLUTAMATE AND GRIN1</scope>
    <scope>FUNCTION</scope>
    <scope>TRANSPORTER ACTIVITY</scope>
    <scope>SUBCELLULAR LOCATION</scope>
    <scope>SUBUNIT</scope>
    <scope>DISULFIDE BONDS</scope>
</reference>
<reference evidence="43 44 45 46 49" key="6">
    <citation type="journal article" date="2016" name="Neuron">
        <title>Positive Allosteric Modulators of GluN2A-Containing NMDARs with Distinct Modes of Action and Impacts on Circuit Function.</title>
        <authorList>
            <person name="Hackos D.H."/>
            <person name="Lupardus P.J."/>
            <person name="Grand T."/>
            <person name="Chen Y."/>
            <person name="Wang T.M."/>
            <person name="Reynen P."/>
            <person name="Gustafson A."/>
            <person name="Wallweber H.J."/>
            <person name="Volgraf M."/>
            <person name="Sellers B.D."/>
            <person name="Schwarz J.B."/>
            <person name="Paoletti P."/>
            <person name="Sheng M."/>
            <person name="Zhou Q."/>
            <person name="Hanson J.E."/>
        </authorList>
    </citation>
    <scope>X-RAY CRYSTALLOGRAPHY (1.81 ANGSTROMS) OF 401-539 AND 566-800 IN COMPLEX WITH GLUTAMATE AND GRIN1</scope>
    <scope>FUNCTION</scope>
    <scope>TRANSPORTER ACTIVITY</scope>
    <scope>SUBUNIT</scope>
    <scope>SUBCELLULAR LOCATION</scope>
    <scope>DISULFIDE BONDS</scope>
</reference>
<reference evidence="51 52" key="7">
    <citation type="journal article" date="2017" name="ACS Med. Chem. Lett.">
        <title>GluN2A-Selective Pyridopyrimidinone Series of NMDAR Positive Allosteric Modulators with an Improved in Vivo Profile.</title>
        <authorList>
            <person name="Villemure E."/>
            <person name="Volgraf M."/>
            <person name="Jiang Y."/>
            <person name="Wu G."/>
            <person name="Ly C.Q."/>
            <person name="Yuen P.W."/>
            <person name="Lu A."/>
            <person name="Luo X."/>
            <person name="Liu M."/>
            <person name="Zhang S."/>
            <person name="Lupardus P.J."/>
            <person name="Wallweber H.J."/>
            <person name="Liederer B.M."/>
            <person name="Deshmukh G."/>
            <person name="Plise E."/>
            <person name="Tay S."/>
            <person name="Wang T.M."/>
            <person name="Hanson J.E."/>
            <person name="Hackos D.H."/>
            <person name="Scearce-Levie K."/>
            <person name="Schwarz J.B."/>
            <person name="Sellers B.D."/>
        </authorList>
    </citation>
    <scope>X-RAY CRYSTALLOGRAPHY (2.40 ANGSTROMS) OF 401-539 AND 566-800 IN COMPLEX WITH GRIN1 AND GLUTAMATE</scope>
    <scope>SUBCELLULAR LOCATION</scope>
    <scope>SUBUNIT</scope>
    <scope>FUNCTION</scope>
    <scope>DISULFIDE BONDS</scope>
</reference>
<reference evidence="53 54 55 56 57" key="8">
    <citation type="journal article" date="2021" name="Neuron">
        <title>Gating mechanism and a modulatory niche of human GluN1-GluN2A NMDA receptors.</title>
        <authorList>
            <person name="Wang H."/>
            <person name="Lv S."/>
            <person name="Stroebel D."/>
            <person name="Zhang J."/>
            <person name="Pan Y."/>
            <person name="Huang X."/>
            <person name="Zhang X."/>
            <person name="Paoletti P."/>
            <person name="Zhu S."/>
        </authorList>
    </citation>
    <scope>STRUCTURE BY ELECTRON MICROSCOPY (3.80 ANGSTROMS) OF 1-842 IN COMPLEX WITH GRIN1</scope>
    <scope>GLYCOSYLATION AT ASN-340 AND ASN-687</scope>
    <scope>SUBUNIT</scope>
    <scope>TOPOLOGY</scope>
</reference>
<reference key="9">
    <citation type="journal article" date="2010" name="Nat. Genet.">
        <title>Mutations in GRIN2A and GRIN2B encoding regulatory subunits of NMDA receptors cause variable neurodevelopmental phenotypes.</title>
        <authorList>
            <person name="Endele S."/>
            <person name="Rosenberger G."/>
            <person name="Geider K."/>
            <person name="Popp B."/>
            <person name="Tamer C."/>
            <person name="Stefanova I."/>
            <person name="Milh M."/>
            <person name="Kortum F."/>
            <person name="Fritsch A."/>
            <person name="Pientka F.K."/>
            <person name="Hellenbroich Y."/>
            <person name="Kalscheuer V.M."/>
            <person name="Kohlhase J."/>
            <person name="Moog U."/>
            <person name="Rappold G."/>
            <person name="Rauch A."/>
            <person name="Ropers H.H."/>
            <person name="von Spiczak S."/>
            <person name="Tonnies H."/>
            <person name="Villeneuve N."/>
            <person name="Villard L."/>
            <person name="Zabel B."/>
            <person name="Zenker M."/>
            <person name="Laube B."/>
            <person name="Reis A."/>
            <person name="Wieczorek D."/>
            <person name="Van Maldergem L."/>
            <person name="Kutsche K."/>
        </authorList>
    </citation>
    <scope>CHROMOSOMAL TRANSLOCATION</scope>
    <scope>VARIANT FESD LYS-615</scope>
    <scope>CHARACTERIZATION OF VARIANT FESD LYS-615</scope>
    <scope>FUNCTION</scope>
    <scope>TRANSPORTER ACTIVITY</scope>
    <scope>ACTIVITY REGULATION</scope>
</reference>
<reference key="10">
    <citation type="journal article" date="2011" name="Nat. Genet.">
        <title>Exome sequencing identifies GRIN2A as frequently mutated in melanoma.</title>
        <authorList>
            <person name="Wei X."/>
            <person name="Walia V."/>
            <person name="Lin J.C."/>
            <person name="Teer J.K."/>
            <person name="Prickett T.D."/>
            <person name="Gartner J."/>
            <person name="Davis S."/>
            <person name="Stemke-Hale K."/>
            <person name="Davies M.A."/>
            <person name="Gershenwald J.E."/>
            <person name="Robinson W."/>
            <person name="Robinson S."/>
            <person name="Rosenberg S.A."/>
            <person name="Samuels Y."/>
        </authorList>
    </citation>
    <scope>PROBABLE INVOLVEMENT IN MELANOMA</scope>
    <scope>VARIANTS LEU-57; ILE-183; ASN-252; PHE-278; LYS-371; LYS-373; GLU-449; SER-459; ARG-595; PHE-598; ILE-653; GLU-712; TRP-740; GLU-889; LYS-920; PHE-929; LYS-962; LYS-1073; LEU-1074; ASN-1153; LYS-1175; GLY-1276; LYS-1285; TRP-1318; LEU-1366; ASN-1421; LEU-1425; LYS-1426 AND CYS-1462</scope>
</reference>
<reference key="11">
    <citation type="journal article" date="2011" name="Transl. Psychiatry">
        <title>Rare mutations in N-methyl-D-aspartate glutamate receptors in autism spectrum disorders and schizophrenia.</title>
        <authorList>
            <consortium name="S2D team"/>
            <person name="Tarabeux J."/>
            <person name="Kebir O."/>
            <person name="Gauthier J."/>
            <person name="Hamdan F.F."/>
            <person name="Xiong L."/>
            <person name="Piton A."/>
            <person name="Spiegelman D."/>
            <person name="Henrion E."/>
            <person name="Millet B."/>
            <person name="Fathalli F."/>
            <person name="Joober R."/>
            <person name="Rapoport J.L."/>
            <person name="DeLisi L.E."/>
            <person name="Fombonne E."/>
            <person name="Mottron L."/>
            <person name="Forget-Dubois N."/>
            <person name="Boivin M."/>
            <person name="Michaud J.L."/>
            <person name="Drapeau P."/>
            <person name="Lafreniere R.G."/>
            <person name="Rouleau G.A."/>
            <person name="Krebs M.O."/>
        </authorList>
    </citation>
    <scope>VARIANTS ILE-143; ASN-189; SER-336; MET-452; SER-576; MET-852; VAL-922; ASN-937; THR-968; MET-998; ALA-1064; SER-1229 AND GLY-1276</scope>
</reference>
<reference key="12">
    <citation type="journal article" date="2012" name="N. Engl. J. Med.">
        <title>Diagnostic exome sequencing in persons with severe intellectual disability.</title>
        <authorList>
            <person name="de Ligt J."/>
            <person name="Willemsen M.H."/>
            <person name="van Bon B.W."/>
            <person name="Kleefstra T."/>
            <person name="Yntema H.G."/>
            <person name="Kroes T."/>
            <person name="Vulto-van Silfhout A.T."/>
            <person name="Koolen D.A."/>
            <person name="de Vries P."/>
            <person name="Gilissen C."/>
            <person name="del Rosario M."/>
            <person name="Hoischen A."/>
            <person name="Scheffer H."/>
            <person name="de Vries B.B."/>
            <person name="Brunner H.G."/>
            <person name="Veltman J.A."/>
            <person name="Vissers L.E."/>
        </authorList>
    </citation>
    <scope>VARIANTS FESD ARG-552 AND VAL-649</scope>
</reference>
<reference key="13">
    <citation type="journal article" date="2013" name="Nat. Genet.">
        <title>GRIN2A mutations in acquired epileptic aphasia and related childhood focal epilepsies and encephalopathies with speech and language dysfunction.</title>
        <authorList>
            <person name="Lesca G."/>
            <person name="Rudolf G."/>
            <person name="Bruneau N."/>
            <person name="Lozovaya N."/>
            <person name="Labalme A."/>
            <person name="Boutry-Kryza N."/>
            <person name="Salmi M."/>
            <person name="Tsintsadze T."/>
            <person name="Addis L."/>
            <person name="Motte J."/>
            <person name="Wright S."/>
            <person name="Tsintsadze V."/>
            <person name="Michel A."/>
            <person name="Doummar D."/>
            <person name="Lascelles K."/>
            <person name="Strug L."/>
            <person name="Waters P."/>
            <person name="de Bellescize J."/>
            <person name="Vrielynck P."/>
            <person name="de Saint Martin A."/>
            <person name="Ville D."/>
            <person name="Ryvlin P."/>
            <person name="Arzimanoglou A."/>
            <person name="Hirsch E."/>
            <person name="Vincent A."/>
            <person name="Pal D."/>
            <person name="Burnashev N."/>
            <person name="Sanlaville D."/>
            <person name="Szepetowski P."/>
        </authorList>
    </citation>
    <scope>VARIANTS FESD SER-184; SER-295; ARG-483; TRP-504; HIS-518; THR-548; VAL-652; ASN-669; THR-694; THR-716; ASN-731; ASN-933 AND ASN-1251</scope>
    <scope>VARIANT GLY-1276</scope>
    <scope>CHARACTERIZATION OF VARIANTS FESD HIS-518 AND VAL-652</scope>
    <scope>SUBCELLULAR LOCATION</scope>
    <scope>FUNCTION</scope>
</reference>
<reference key="14">
    <citation type="journal article" date="2013" name="Nat. Genet.">
        <title>Mutations in GRIN2A cause idiopathic focal epilepsy with rolandic spikes.</title>
        <authorList>
            <person name="Lemke J.R."/>
            <person name="Lal D."/>
            <person name="Reinthaler E.M."/>
            <person name="Steiner I."/>
            <person name="Nothnagel M."/>
            <person name="Alber M."/>
            <person name="Geider K."/>
            <person name="Laube B."/>
            <person name="Schwake M."/>
            <person name="Finsterwalder K."/>
            <person name="Franke A."/>
            <person name="Schilhabel M."/>
            <person name="Jahn J.A."/>
            <person name="Muhle H."/>
            <person name="Boor R."/>
            <person name="Van Paesschen W."/>
            <person name="Caraballo R."/>
            <person name="Fejerman N."/>
            <person name="Weckhuysen S."/>
            <person name="De Jonghe P."/>
            <person name="Larsen J."/>
            <person name="Moller R.S."/>
            <person name="Hjalgrim H."/>
            <person name="Addis L."/>
            <person name="Tang S."/>
            <person name="Hughes E."/>
            <person name="Pal D.K."/>
            <person name="Veri K."/>
            <person name="Vaher U."/>
            <person name="Talvik T."/>
            <person name="Dimova P."/>
            <person name="Guerrero Lopez R."/>
            <person name="Serratosa J.M."/>
            <person name="Linnankivi T."/>
            <person name="Lehesjoki A.E."/>
            <person name="Ruf S."/>
            <person name="Wolff M."/>
            <person name="Buerki S."/>
            <person name="Wohlrab G."/>
            <person name="Kroell J."/>
            <person name="Datta A.N."/>
            <person name="Fiedler B."/>
            <person name="Kurlemann G."/>
            <person name="Kluger G."/>
            <person name="Hahn A."/>
            <person name="Haberlandt D.E."/>
            <person name="Kutzer C."/>
            <person name="Sperner J."/>
            <person name="Becker F."/>
            <person name="Weber Y.G."/>
            <person name="Feucht M."/>
            <person name="Steinbock H."/>
            <person name="Neophythou B."/>
            <person name="Ronen G.M."/>
            <person name="Gruber-Sedlmayr U."/>
            <person name="Geldner J."/>
            <person name="Harvey R.J."/>
            <person name="Hoffmann P."/>
            <person name="Herms S."/>
            <person name="Altmuller J."/>
            <person name="Toliat M.R."/>
            <person name="Thiele H."/>
            <person name="Nurnberg P."/>
            <person name="Wilhelm C."/>
            <person name="Stephani U."/>
            <person name="Helbig I."/>
            <person name="Lerche H."/>
            <person name="Zimprich F."/>
            <person name="Neubauer B.A."/>
            <person name="Biskup S."/>
            <person name="von Spiczak S."/>
        </authorList>
    </citation>
    <scope>VARIANTS FESD ARG-79; ILE-183; TYR-231; VAL-243; VAL-290; TRP-370; ARG-436; SER-547 DEL; SER-699; VAL-705; LYS-714; THR-727; LEU-734; GLU-772; THR-814; PHE-904 AND SER-976</scope>
    <scope>CHARACTERIZATION OF VARIANT FESD VAL-243</scope>
    <scope>FUNCTION</scope>
    <scope>ACTIVITY REGULATION</scope>
</reference>
<reference key="15">
    <citation type="journal article" date="2013" name="Nat. Genet.">
        <title>GRIN2A mutations cause epilepsy-aphasia spectrum disorders.</title>
        <authorList>
            <person name="Carvill G.L."/>
            <person name="Regan B.M."/>
            <person name="Yendle S.C."/>
            <person name="O'Roak B.J."/>
            <person name="Lozovaya N."/>
            <person name="Bruneau N."/>
            <person name="Burnashev N."/>
            <person name="Khan A."/>
            <person name="Cook J."/>
            <person name="Geraghty E."/>
            <person name="Sadleir L.G."/>
            <person name="Turner S.J."/>
            <person name="Tsai M.H."/>
            <person name="Webster R."/>
            <person name="Ouvrier R."/>
            <person name="Damiano J.A."/>
            <person name="Berkovic S.F."/>
            <person name="Shendure J."/>
            <person name="Hildebrand M.S."/>
            <person name="Szepetowski P."/>
            <person name="Scheffer I.E."/>
            <person name="Mefford H.C."/>
        </authorList>
    </citation>
    <scope>VARIANT FESD MET-531</scope>
    <scope>CHARACTERIZATION OF VARIANT FESD MET-531</scope>
    <scope>FUNCTION</scope>
</reference>
<reference key="16">
    <citation type="journal article" date="2014" name="Front. Oncol.">
        <title>Evidence that GRIN2A mutations in melanoma correlate with decreased survival.</title>
        <authorList>
            <person name="D'mello S.A."/>
            <person name="Flanagan J.U."/>
            <person name="Green T.N."/>
            <person name="Leung E.Y."/>
            <person name="Askarian-Amiri M.E."/>
            <person name="Joseph W.R."/>
            <person name="McCrystal M.R."/>
            <person name="Isaacs R.J."/>
            <person name="Shaw J.H."/>
            <person name="Furneaux C.E."/>
            <person name="During M.J."/>
            <person name="Finlay G.J."/>
            <person name="Baguley B.C."/>
            <person name="Kalev-Zylinska M.L."/>
        </authorList>
    </citation>
    <scope>PROBABLE INVOLVEMENT IN MELANOMA</scope>
    <scope>VARIANTS PHE-349; ALA-762; GLU-889; LEU-1132 AND SER-1133</scope>
</reference>
<reference key="17">
    <citation type="journal article" date="2014" name="Epilepsia">
        <title>Whole-exome sequencing in an individual with severe global developmental delay and intractable epilepsy identifies a novel, de novo GRIN2A mutation.</title>
        <authorList>
            <consortium name="FORGE Canada Consortium"/>
            <person name="Venkateswaran S."/>
            <person name="Myers K.A."/>
            <person name="Smith A.C."/>
            <person name="Beaulieu C.L."/>
            <person name="Schwartzentruber J.A."/>
            <person name="Majewski J."/>
            <person name="Bulman D."/>
            <person name="Boycott K.M."/>
            <person name="Dyment D.A."/>
        </authorList>
    </citation>
    <scope>VARIANT FESD VAL-817</scope>
</reference>
<reference key="18">
    <citation type="journal article" date="2014" name="Nat. Commun.">
        <title>Functional analysis of a de novo GRIN2A missense mutation associated with early-onset epileptic encephalopathy.</title>
        <authorList>
            <person name="Yuan H."/>
            <person name="Hansen K.B."/>
            <person name="Zhang J."/>
            <person name="Pierson T.M."/>
            <person name="Markello T.C."/>
            <person name="Fajardo K.V."/>
            <person name="Holloman C.M."/>
            <person name="Golas G."/>
            <person name="Adams D.R."/>
            <person name="Boerkoel C.F."/>
            <person name="Gahl W.A."/>
            <person name="Traynelis S.F."/>
        </authorList>
    </citation>
    <scope>VARIANT FESD MET-812</scope>
    <scope>CHARACTERIZATION OF VARIANT FESD MET-812</scope>
    <scope>FUNCTION</scope>
    <scope>TRANSPORTER ACTIVITY</scope>
    <scope>ACTIVITY REGULATION</scope>
</reference>
<reference key="19">
    <citation type="journal article" date="2015" name="Neuron">
        <title>Targeted DNA Sequencing from Autism Spectrum Disorder Brains Implicates Multiple Genetic Mechanisms.</title>
        <authorList>
            <person name="D'Gama A.M."/>
            <person name="Pochareddy S."/>
            <person name="Li M."/>
            <person name="Jamuar S.S."/>
            <person name="Reiff R.E."/>
            <person name="Lam A.T."/>
            <person name="Sestan N."/>
            <person name="Walsh C.A."/>
        </authorList>
    </citation>
    <scope>VARIANT ASN-884</scope>
</reference>
<reference key="20">
    <citation type="journal article" date="2016" name="Am. J. Hum. Genet.">
        <title>Mechanistic insight into NMDA receptor dysregulation by rare variants in the GluN2A and GluN2B agonist binding domains.</title>
        <authorList>
            <person name="Swanger S.A."/>
            <person name="Chen W."/>
            <person name="Wells G."/>
            <person name="Burger P.B."/>
            <person name="Tankovic A."/>
            <person name="Bhattacharya S."/>
            <person name="Strong K.L."/>
            <person name="Hu C."/>
            <person name="Kusumoto H."/>
            <person name="Zhang J."/>
            <person name="Adams D.R."/>
            <person name="Millichap J.J."/>
            <person name="Petrovski S."/>
            <person name="Traynelis S.F."/>
            <person name="Yuan H."/>
        </authorList>
    </citation>
    <scope>VARIANTS FESD ALA-506 AND GLY-685</scope>
    <scope>CHARACTERIZATION OF VARIANT FESD ARG-436; ARG-483; TRP-504; ALA-506; HIS-518; MET-531; ASN-669; GLY-685; THR-694; SER-699; VAL-705; LYS-714; THR-716; THR-727; ASN-731; LEU-734; GLU-772</scope>
    <scope>CHARACTERIZATION OF VARIANT MET-452</scope>
    <scope>SUBCELLULAR LOCATION</scope>
</reference>
<reference key="21">
    <citation type="journal article" date="2016" name="Neuropharmacology">
        <title>Altered zinc sensitivity of NMDA receptors harboring clinically-relevant mutations.</title>
        <authorList>
            <person name="Serraz B."/>
            <person name="Grand T."/>
            <person name="Paoletti P."/>
        </authorList>
    </citation>
    <scope>CHARACTERIZATION OF VARIANTS ARG-79; ILE-183; SER-184; TYR-231; VAL-243; VAL-290; SER-295; TRP-370 AND ARG-436</scope>
    <scope>FUNCTION</scope>
    <scope>ACTIVITY REGULATION</scope>
</reference>
<reference key="22">
    <citation type="journal article" date="2017" name="Hum. Mutat.">
        <title>Diagnostic targeted resequencing in 349 patients with drug-resistant pediatric epilepsies identifies causative mutations in 30 different genes.</title>
        <authorList>
            <consortium name="Clinical Study Group"/>
            <person name="Parrini E."/>
            <person name="Marini C."/>
            <person name="Mei D."/>
            <person name="Galuppi A."/>
            <person name="Cellini E."/>
            <person name="Pucatti D."/>
            <person name="Chiti L."/>
            <person name="Rutigliano D."/>
            <person name="Bianchini C."/>
            <person name="Virdo S."/>
            <person name="De Vita D."/>
            <person name="Bigoni S."/>
            <person name="Barba C."/>
            <person name="Mari F."/>
            <person name="Montomoli M."/>
            <person name="Pisano T."/>
            <person name="Rosati A."/>
            <person name="Guerrini R."/>
        </authorList>
    </citation>
    <scope>VARIANTS ASP-380; SER-989 AND GLY-1276</scope>
    <scope>VARIANT FESD ASP-716</scope>
</reference>
<reference key="23">
    <citation type="journal article" date="2017" name="Mol. Pharmacol.">
        <title>Functional evaluation of a de novo GRIN2A mutation identified in a patient with profound global developmental delay and refractory epilepsy.</title>
        <authorList>
            <person name="Chen W."/>
            <person name="Tankovic A."/>
            <person name="Burger P.B."/>
            <person name="Kusumoto H."/>
            <person name="Traynelis S.F."/>
            <person name="Yuan H."/>
        </authorList>
    </citation>
    <scope>CHARACTERIZATION OF VARIANT FESD VAL-817</scope>
    <scope>FUNCTION</scope>
    <scope>ACTIVITY REGULATION</scope>
</reference>
<reference key="24">
    <citation type="journal article" date="2017" name="PLoS ONE">
        <title>A de novo loss-of-function GRIN2A mutation associated with childhood focal epilepsy and acquired epileptic aphasia.</title>
        <authorList>
            <person name="Gao K."/>
            <person name="Tankovic A."/>
            <person name="Zhang Y."/>
            <person name="Kusumoto H."/>
            <person name="Zhang J."/>
            <person name="Chen W."/>
            <person name="XiangWei W."/>
            <person name="Shaulsky G.H."/>
            <person name="Hu C."/>
            <person name="Traynelis S.F."/>
            <person name="Yuan H."/>
            <person name="Jiang Y."/>
        </authorList>
    </citation>
    <scope>VARIANT FESD ASN-731</scope>
    <scope>CHARACTERIZATION OF VARIANT FESD ASN-731</scope>
    <scope>FUNCTION</scope>
    <scope>ACTIVITY REGULATION</scope>
</reference>
<reference key="25">
    <citation type="journal article" date="2017" name="PLoS Genet.">
        <title>Molecular mechanism of disease-associated mutations in the pre-M1 helix of NMDA receptors and potential rescue pharmacology.</title>
        <authorList>
            <person name="Ogden K.K."/>
            <person name="Chen W."/>
            <person name="Swanger S.A."/>
            <person name="McDaniel M.J."/>
            <person name="Fan L.Z."/>
            <person name="Hu C."/>
            <person name="Tankovic A."/>
            <person name="Kusumoto H."/>
            <person name="Kosobucki G.J."/>
            <person name="Schulien A.J."/>
            <person name="Su Z."/>
            <person name="Pecha J."/>
            <person name="Bhattacharya S."/>
            <person name="Petrovski S."/>
            <person name="Cohen A.E."/>
            <person name="Aizenman E."/>
            <person name="Traynelis S.F."/>
            <person name="Yuan H."/>
        </authorList>
    </citation>
    <scope>CHARACTERIZATION OF VARIANTS FESD THR-548 AND ARG-552</scope>
    <scope>MUTAGENESIS OF PRO-552</scope>
    <scope>FUNCTION</scope>
    <scope>ACTIVITY REGULATION</scope>
    <scope>SUBCELLULAR LOCATION</scope>
</reference>
<reference key="26">
    <citation type="journal article" date="2017" name="Sci. Rep.">
        <title>Epilepsy-associated GRIN2A mutations reduce NMDA receptor trafficking and agonist potency - molecular profiling and functional rescue.</title>
        <authorList>
            <person name="Addis L."/>
            <person name="Virdee J.K."/>
            <person name="Vidler L.R."/>
            <person name="Collier D.A."/>
            <person name="Pal D.K."/>
            <person name="Ursu D."/>
        </authorList>
    </citation>
    <scope>CHARACTERIZATION OF VARIANTS ARG-79; TYR-231; ARG-436; ARG-483; VAL-705; LYS-714; ASN-731; THR-814; ASN-933 AND SER-976</scope>
    <scope>FUNCTION</scope>
    <scope>TRANSPORTER ACTIVITY</scope>
    <scope>SUBCELLULAR LOCATION</scope>
</reference>
<reference key="27">
    <citation type="journal article" date="2018" name="Mov. Disord.">
        <title>A novel missense mutation in GRIN2A causes a nonepileptic neurodevelopmental disorder.</title>
        <authorList>
            <person name="Fernandez-Marmiesse A."/>
            <person name="Kusumoto H."/>
            <person name="Rekarte S."/>
            <person name="Roca I."/>
            <person name="Zhang J."/>
            <person name="Myers S.J."/>
            <person name="Traynelis S.F."/>
            <person name="Couce M.L."/>
            <person name="Gutierrez-Solana L."/>
            <person name="Yuan H."/>
        </authorList>
    </citation>
    <scope>VARIANT ASP-643</scope>
    <scope>CHARACTERIZATION OF VARIANT ASP-643</scope>
    <scope>FUNCTION</scope>
    <scope>ACTIVITY REGULATION</scope>
</reference>
<reference key="28">
    <citation type="journal article" date="2019" name="Brain">
        <title>GRIN2A-related disorders: genotype and functional consequence predict phenotype.</title>
        <authorList>
            <consortium name="GRIN2A study group"/>
            <person name="Strehlow V."/>
            <person name="Heyne H.O."/>
            <person name="Vlaskamp D.R.M."/>
            <person name="Marwick K.F.M."/>
            <person name="Rudolf G."/>
            <person name="de Bellescize J."/>
            <person name="Biskup S."/>
            <person name="Brilstra E.H."/>
            <person name="Brouwer O.F."/>
            <person name="Callenbach P.M.C."/>
            <person name="Hentschel J."/>
            <person name="Hirsch E."/>
            <person name="Kind P.C."/>
            <person name="Mignot C."/>
            <person name="Platzer K."/>
            <person name="Rump P."/>
            <person name="Skehel P.A."/>
            <person name="Wyllie D.J.A."/>
            <person name="Hardingham G.E."/>
            <person name="van Ravenswaaij-Arts C.M.A."/>
            <person name="Lesca G."/>
            <person name="Lemke J.R."/>
        </authorList>
    </citation>
    <scope>VARIANTS FESD GLN-411; SER-498; CYS-518; VAL-532; GLN-611; SER-614; THR-635; GLY-644; SER-648; VAL-649; PRO-649; ILE-653; THR-654; ALA-684; GLN-695; GLY-713; THR-716; ASN-731; THR-733; ARG-809; VAL-817 AND GLU-818</scope>
</reference>
<reference key="29">
    <citation type="journal article" date="2022" name="Mol. Psychiatry">
        <title>Complex functional phenotypes of NMDA receptor disease variants.</title>
        <authorList>
            <person name="Iacobucci G.J."/>
            <person name="Liu B."/>
            <person name="Wen H."/>
            <person name="Sincox B."/>
            <person name="Zheng W."/>
            <person name="Popescu G.K."/>
        </authorList>
    </citation>
    <scope>CHARACTERIZATION OF VARIANTS ARG-552 AND VAL-652</scope>
    <scope>FUNCTION</scope>
    <scope>TRANSPORTER ACTIVITY</scope>
</reference>
<reference key="30">
    <citation type="journal article" date="2022" name="Nature">
        <title>Rare coding variants in ten genes confer substantial risk for schizophrenia.</title>
        <authorList>
            <person name="Singh T."/>
            <person name="Poterba T."/>
            <person name="Curtis D."/>
            <person name="Akil H."/>
            <person name="Al Eissa M."/>
            <person name="Barchas J.D."/>
            <person name="Bass N."/>
            <person name="Bigdeli T.B."/>
            <person name="Breen G."/>
            <person name="Bromet E.J."/>
            <person name="Buckley P.F."/>
            <person name="Bunney W.E."/>
            <person name="Bybjerg-Grauholm J."/>
            <person name="Byerley W.F."/>
            <person name="Chapman S.B."/>
            <person name="Chen W.J."/>
            <person name="Churchhouse C."/>
            <person name="Craddock N."/>
            <person name="Cusick C.M."/>
            <person name="DeLisi L."/>
            <person name="Dodge S."/>
            <person name="Escamilla M.A."/>
            <person name="Eskelinen S."/>
            <person name="Fanous A.H."/>
            <person name="Faraone S.V."/>
            <person name="Fiorentino A."/>
            <person name="Francioli L."/>
            <person name="Gabriel S.B."/>
            <person name="Gage D."/>
            <person name="Gagliano Taliun S.A."/>
            <person name="Ganna A."/>
            <person name="Genovese G."/>
            <person name="Glahn D.C."/>
            <person name="Grove J."/>
            <person name="Hall M.H."/>
            <person name="Haemaelaeinen E."/>
            <person name="Heyne H.O."/>
            <person name="Holi M."/>
            <person name="Hougaard D.M."/>
            <person name="Howrigan D.P."/>
            <person name="Huang H."/>
            <person name="Hwu H.G."/>
            <person name="Kahn R.S."/>
            <person name="Kang H.M."/>
            <person name="Karczewski K.J."/>
            <person name="Kirov G."/>
            <person name="Knowles J.A."/>
            <person name="Lee F.S."/>
            <person name="Lehrer D.S."/>
            <person name="Lescai F."/>
            <person name="Malaspina D."/>
            <person name="Marder S.R."/>
            <person name="McCarroll S.A."/>
            <person name="McIntosh A.M."/>
            <person name="Medeiros H."/>
            <person name="Milani L."/>
            <person name="Morley C.P."/>
            <person name="Morris D.W."/>
            <person name="Mortensen P.B."/>
            <person name="Myers R.M."/>
            <person name="Nordentoft M."/>
            <person name="O'Brien N.L."/>
            <person name="Olivares A.M."/>
            <person name="Ongur D."/>
            <person name="Ouwehand W.H."/>
            <person name="Palmer D.S."/>
            <person name="Paunio T."/>
            <person name="Quested D."/>
            <person name="Rapaport M.H."/>
            <person name="Rees E."/>
            <person name="Rollins B."/>
            <person name="Satterstrom F.K."/>
            <person name="Schatzberg A."/>
            <person name="Scolnick E."/>
            <person name="Scott L.J."/>
            <person name="Sharp S.I."/>
            <person name="Sklar P."/>
            <person name="Smoller J.W."/>
            <person name="Sobell J.L."/>
            <person name="Solomonson M."/>
            <person name="Stahl E.A."/>
            <person name="Stevens C.R."/>
            <person name="Suvisaari J."/>
            <person name="Tiao G."/>
            <person name="Watson S.J."/>
            <person name="Watts N.A."/>
            <person name="Blackwood D.H."/>
            <person name="Boerglum A.D."/>
            <person name="Cohen B.M."/>
            <person name="Corvin A.P."/>
            <person name="Esko T."/>
            <person name="Freimer N.B."/>
            <person name="Glatt S.J."/>
            <person name="Hultman C.M."/>
            <person name="McQuillin A."/>
            <person name="Palotie A."/>
            <person name="Pato C.N."/>
            <person name="Pato M.T."/>
            <person name="Pulver A.E."/>
            <person name="St Clair D."/>
            <person name="Tsuang M.T."/>
            <person name="Vawter M.P."/>
            <person name="Walters J.T."/>
            <person name="Werge T.M."/>
            <person name="Ophoff R.A."/>
            <person name="Sullivan P.F."/>
            <person name="Owen M.J."/>
            <person name="Boehnke M."/>
            <person name="O'Donovan M.C."/>
            <person name="Neale B.M."/>
            <person name="Daly M.J."/>
        </authorList>
    </citation>
    <scope>VARIANTS 58-GLU--VAL-1464 DEL; ARG-591; MET-605; CYS-698; 700-TYR--VAL-1464 DEL; ALA-784; ILE-788; MET-794; PRO-811 AND THR-1295</scope>
    <scope>INVOLVEMENT IN SCHIZOPHRENIA</scope>
</reference>
<reference key="31">
    <citation type="journal article" date="2024" name="Cell. Mol. Life Sci.">
        <title>De novo GRIN variants in M3 helix associated with neurological disorders control channel gating of NMDA receptor.</title>
        <authorList>
            <person name="Xu Y."/>
            <person name="Song R."/>
            <person name="Perszyk R.E."/>
            <person name="Chen W."/>
            <person name="Kim S."/>
            <person name="Park K.L."/>
            <person name="Allen J.P."/>
            <person name="Nocilla K.A."/>
            <person name="Zhang J."/>
            <person name="Xiang Wei W."/>
            <person name="Tankovic A."/>
            <person name="McDaniels E.D."/>
            <person name="Sheikh R."/>
            <person name="Mizu R.K."/>
            <person name="Karamchandani M.M."/>
            <person name="Hu C."/>
            <person name="Kusumoto H."/>
            <person name="Pecha J."/>
            <person name="Cappuccio G."/>
            <person name="Gaitanis J."/>
            <person name="Sullivan J."/>
            <person name="Shashi V."/>
            <person name="Petrovski S."/>
            <person name="Jauss R.T."/>
            <person name="Lee H.K."/>
            <person name="Bozarth X."/>
            <person name="Lynch D.R."/>
            <person name="Helbig I."/>
            <person name="Pierson T.M."/>
            <person name="Boerkoel C.F."/>
            <person name="Myers S.J."/>
            <person name="Lemke J.R."/>
            <person name="Benke T.A."/>
            <person name="Yuan H."/>
            <person name="Traynelis S.F."/>
        </authorList>
    </citation>
    <scope>VARIANTS FESD THR-635; ILE-639; ARG-642; ALA-646; SER-648; SER-650; VAL-652 AND VAL-653</scope>
    <scope>CHARACTERIZATION OF VARIANTS FESD THR-635; ILE-639; ARG-642; GLY-644; ALA-646; SER-648; VAL-649; SER-650; ILE-653; VAL-653 AND THR-654</scope>
    <scope>VARIANT MET-642</scope>
    <scope>CHARACTERIZATION OF VARIANTS MET-642 AND ASP-643</scope>
    <scope>MUTAGENESIS OF SER-632 AND THR-646</scope>
    <scope>FUNCTION</scope>
    <scope>TRANSPORTER ACTIVITY</scope>
    <scope>ACTIVITY REGULATION</scope>
    <scope>SUBCELLULAR LOCATION</scope>
</reference>
<reference key="32">
    <citation type="journal article" date="2024" name="Sci. Rep.">
        <title>Differential functional consequences of GRIN2A mutations associated with schizophrenia and neurodevelopmental disorders.</title>
        <authorList>
            <person name="Shepard N."/>
            <person name="Baez-Nieto D."/>
            <person name="Iqbal S."/>
            <person name="Kurganov E."/>
            <person name="Budnik N."/>
            <person name="Campbell A.J."/>
            <person name="Pan J.Q."/>
            <person name="Sheng M."/>
            <person name="Farsi Z."/>
        </authorList>
    </citation>
    <scope>CHARACTERIZATION OF VARIANTS 58-GLU--GLU-1461 DEL; LEU-576; LYS-586; ARG-591; MET-605; ILE-653; HIS-671; CYS-698; 700-TYR--VAL-1464 DEL; ARG-707; VAL-727; THR-727; MET-775; ALA-784; ILE-788; MET-794; ARG-809; PRO-811; MET-812; LEU-967; THR-1295 AND 1339-LYS--VAL-1464 DEL</scope>
    <scope>FUNCTION</scope>
</reference>
<comment type="function">
    <text evidence="3 4 8 12 13 14 16 19 20 21 24 25 26 27 28 29 33 34 35 37">Component of N-methyl-D-aspartate (NMDA) receptors (NMDARs) that function as heterotetrameric, ligand-gated cation channels with high calcium permeability and voltage-dependent block by Mg(2+) (PubMed:20890276, PubMed:23933818, PubMed:23933819, PubMed:23933820, PubMed:24504326, PubMed:26875626, PubMed:26919761, PubMed:28242877, PubMed:36117210, PubMed:38538865, PubMed:8768735). NMDARs participate in synaptic plasticity for learning and memory formation by contributing to the slow phase of excitatory postsynaptic current, long-term synaptic potentiation, and learning (By similarity). Channel activation requires binding of the neurotransmitter L-glutamate to the GluN2 subunit, glycine or D-serine binding to the GluN1 subunit, plus membrane depolarization to eliminate channel inhibition by Mg(2+) (PubMed:23933818, PubMed:23933819, PubMed:23933820, PubMed:24504326, PubMed:26875626, PubMed:26919761, PubMed:27288002, PubMed:28095420, PubMed:28105280, PubMed:28126851, PubMed:28182669, PubMed:29644724, PubMed:38307912, PubMed:8768735). NMDARs mediate simultaneously the potasium efflux and the influx of calcium and sodium (By similarity). Each GluN2 subunit confers differential attributes to channel properties, including activation, deactivation and desensitization kinetics, pH sensitivity, Ca2(+) permeability, and binding to allosteric modulators (PubMed:26875626, PubMed:26919761). Participates in the synaptic plasticity regulation through activation by the L-glutamate releaseed by BEST1, into the synaptic cleft, upon F2R/PAR-1 activation in astrocyte (By similarity).</text>
</comment>
<comment type="catalytic activity">
    <reaction evidence="8 16 19 20 28 33 35 37">
        <text>Ca(2+)(in) = Ca(2+)(out)</text>
        <dbReference type="Rhea" id="RHEA:29671"/>
        <dbReference type="ChEBI" id="CHEBI:29108"/>
    </reaction>
</comment>
<comment type="catalytic activity">
    <reaction evidence="33 35">
        <text>Na(+)(in) = Na(+)(out)</text>
        <dbReference type="Rhea" id="RHEA:34963"/>
        <dbReference type="ChEBI" id="CHEBI:29101"/>
    </reaction>
</comment>
<comment type="catalytic activity">
    <reaction evidence="4">
        <text>K(+)(in) = K(+)(out)</text>
        <dbReference type="Rhea" id="RHEA:29463"/>
        <dbReference type="ChEBI" id="CHEBI:29103"/>
    </reaction>
</comment>
<comment type="activity regulation">
    <text evidence="8 16 21 24 26 27 29 35 37">NMDA glutamate receptor activity is inhibited by endogenous Mg(2+) in a voltage-dependent manner (PubMed:20890276, PubMed:24504326, PubMed:28095420, PubMed:28126851, PubMed:28182669, PubMed:29644724, PubMed:38538865, PubMed:8768735). NMDA glutamate receptor activity is inhibited by endogenous Zn(2+) (PubMed:24504326, PubMed:27288002, PubMed:28126851, PubMed:28182669, PubMed:29644724). NMDA glutamate receptor activity is inhibited by endogenous protons (PubMed:24504326, PubMed:27288002, PubMed:28095420, PubMed:28126851, PubMed:28182669, PubMed:29644724, PubMed:38538865).</text>
</comment>
<comment type="subunit">
    <text evidence="3 5 19 20 25 31 37">Heterotetramer (PubMed:34186027). Forms heterotetrameric channels composed of two GluN1/zeta subunits (GRIN1), and two identical GluN2/epsilon subunits (GRIN2A, GRIN2B, GRIN2C or GRIN2D) or GluN3 subunits (GRIN3A or GRIN3B) (in vitro) (PubMed:26875626, PubMed:26919761, PubMed:28105280, PubMed:34186027, PubMed:8768735). Can also form heterotetrameric channels that contain at least two GluN1 subunits and at least two different GluN2 subunits (or a combination of one GluN2 and one GluN3 subunits) (in vitro). In vivo, the subunit composition may depend on the expression levels of the different subunits. Found in a complex with GRIN1, GRIN3A and PPP2CB (By similarity). Found in a complex with GRIN1 and GRIN3B (By similarity). Interacts with AIP1 (By similarity). Interacts with HIP1 and NETO1. Interacts with SNX27 (via PDZ domain); the interaction is required for recycling to the plasma membrane when endocytosed and prevent degradation in lysosomes (By similarity). Interacts with PDZ domains of PATJ and DLG4. Interacts with LRFN2 (By similarity). Interacts with RPH3A and DLG4; this ternary complex regulates NMDA receptor composition at postsynaptic membranes (By similarity). Interacts with SORCS2 (By similarity). Interacts with ARC; preventing ARC oligomerization (By similarity). Interacts (via the extreme C-terminus) with FRMPD2 (the second PDZ domain); the interaction is direct and is likely to promote NMDAR-mediated neural signal transmission (By similarity). GRIN2A binds FRMPD2 with lower affinity than GRIN2B (By similarity).</text>
</comment>
<comment type="interaction">
    <interactant intactId="EBI-7249937">
        <id>Q12879</id>
    </interactant>
    <interactant intactId="EBI-80389">
        <id>P78352</id>
        <label>DLG4</label>
    </interactant>
    <organismsDiffer>false</organismsDiffer>
    <experiments>6</experiments>
</comment>
<comment type="interaction">
    <interactant intactId="EBI-7249937">
        <id>Q12879</id>
    </interactant>
    <interactant intactId="EBI-1046087">
        <id>Q07954</id>
        <label>LRP1</label>
    </interactant>
    <organismsDiffer>false</organismsDiffer>
    <experiments>2</experiments>
</comment>
<comment type="interaction">
    <interactant intactId="EBI-7249937">
        <id>Q12879</id>
    </interactant>
    <interactant intactId="EBI-349596">
        <id>Q62936</id>
        <label>Dlg3</label>
    </interactant>
    <organismsDiffer>true</organismsDiffer>
    <experiments>5</experiments>
</comment>
<comment type="interaction">
    <interactant intactId="EBI-7249937">
        <id>Q12879</id>
    </interactant>
    <interactant intactId="EBI-375655">
        <id>P31016</id>
        <label>Dlg4</label>
    </interactant>
    <organismsDiffer>true</organismsDiffer>
    <experiments>2</experiments>
</comment>
<comment type="interaction">
    <interactant intactId="EBI-27070593">
        <id>Q12879-1</id>
    </interactant>
    <interactant intactId="EBI-27070564">
        <id>Q05586-1</id>
        <label>GRIN1</label>
    </interactant>
    <organismsDiffer>false</organismsDiffer>
    <experiments>2</experiments>
</comment>
<comment type="subcellular location">
    <subcellularLocation>
        <location evidence="5">Cell projection</location>
        <location evidence="5">Dendritic spine</location>
    </subcellularLocation>
    <subcellularLocation>
        <location evidence="14 19 20 22 24 25 28 35 37">Cell membrane</location>
        <topology evidence="31">Multi-pass membrane protein</topology>
    </subcellularLocation>
    <subcellularLocation>
        <location evidence="3">Synapse</location>
    </subcellularLocation>
    <subcellularLocation>
        <location evidence="5">Postsynaptic cell membrane</location>
        <topology evidence="31">Multi-pass membrane protein</topology>
    </subcellularLocation>
    <subcellularLocation>
        <location evidence="3">Cytoplasmic vesicle membrane</location>
    </subcellularLocation>
    <text evidence="3">Expression at the dendrite cell membrane and at synapses is regulated by SORCS2 and the retromer complex.</text>
</comment>
<comment type="alternative products">
    <event type="alternative splicing"/>
    <isoform>
        <id>Q12879-1</id>
        <name>1</name>
        <sequence type="displayed"/>
    </isoform>
    <isoform>
        <id>Q12879-2</id>
        <name>2</name>
        <sequence type="described" ref="VSP_044300"/>
    </isoform>
</comment>
<comment type="domain">
    <text evidence="5">Contains an N-terminal domain, a ligand-binding domain and a transmembrane domain. Agonist binding to the extracellular ligand-binding domains triggers channel gating.</text>
</comment>
<comment type="domain">
    <text evidence="2">A hydrophobic region that gives rise to the prediction of a transmembrane span does not cross the membrane, but is part of a discontinuously helical region that dips into the membrane and is probably part of the pore and of the selectivity filter.</text>
</comment>
<comment type="disease" evidence="8 11 12 13 14 16 17 21 22 23 24 26 27 30 35">
    <disease id="DI-03169">
        <name>Epilepsy, focal, with speech disorder and with or without impaired intellectual development</name>
        <acronym>FESD</acronym>
        <description>An autosomal dominant, highly variable neurologic disorder. Features range from severe early-onset seizures associated with delayed psychomotor development, persistent speech difficulties, and intellectual disability to a more benign entity characterized by childhood onset of mild or asymptomatic seizures associated with transient speech difficulties followed by remission of seizures in adolescence and normal psychomotor development. The disorder encompasses several clinical entities, including Landau-Kleffner syndrome, epileptic encephalopathy with continuous spike and wave during slow-wave sleep, autosomal dominant rolandic epilepsy, intellectual disability and speech dyspraxia, and benign epilepsy with centrotemporal spikes.</description>
        <dbReference type="MIM" id="245570"/>
    </disease>
    <text>The disease is caused by variants affecting the gene represented in this entry.</text>
</comment>
<comment type="disease">
    <text evidence="32">Rare genetic variations in GRIN2A may be associated with susceptibility to schizophrenia, a severe psychiatric disorder characterized by hallucinations, delusions, disorganized speech and behavior, cognitive impairment, and social withdrawal.</text>
</comment>
<comment type="disease">
    <text>A chromosomal aberration involving GRIN2A has been found in a family with epilepsy and neurodevelopmental defects. Translocation t(16;17)(p13.2;q11.2).</text>
</comment>
<comment type="disease">
    <text evidence="9 15">GRIN2A somatic mutations have been frequently found in cutaneous malignant melanoma, suggesting that the glutamate signaling pathway may play a role in the pathogenesis of melanoma.</text>
</comment>
<comment type="similarity">
    <text evidence="41">Belongs to the glutamate-gated ion channel (TC 1.A.10.1) family. NR2A/GRIN2A subfamily.</text>
</comment>
<sequence>MGRVGYWTLLVLPALLVWRGPAPSAAAEKGPPALNIAVMLGHSHDVTERELRTLWGPEQAAGLPLDVNVVALLMNRTDPKSLITHVCDLMSGARIHGLVFGDDTDQEAVAQMLDFISSHTFVPILGIHGGASMIMADKDPTSTFFQFGASIQQQATVMLKIMQDYDWHVFSLVTTIFPGYREFISFVKTTVDNSFVGWDMQNVITLDTSFEDAKTQVQLKKIHSSVILLYCSKDEAVLILSEARSLGLTGYDFFWIVPSLVSGNTELIPKEFPSGLISVSYDDWDYSLEARVRDGIGILTTAASSMLEKFSYIPEAKASCYGQMERPEVPMHTLHPFMVNVTWDGKDLSFTEEGYQVHPRLVVIVLNKDREWEKVGKWENHTLSLRHAVWPRYKSFSDCEPDDNHLSIVTLEEAPFVIVEDIDPLTETCVRNTVPCRKFVKINNSTNEGMNVKKCCKGFCIDILKKLSRTVKFTYDLYLVTNGKHGKKVNNVWNGMIGEVVYQRAVMAVGSLTINEERSEVVDFSVPFVETGISVMVSRSNGTVSPSAFLEPFSASVWVMMFVMLLIVSAIAVFVFEYFSPVGYNRNLAKGKAPHGPSFTIGKAIWLLWGLVFNNSVPVQNPKGTTSKIMVSVWAFFAVIFLASYTANLAAFMIQEEFVDQVTGLSDKKFQRPHDYSPPFRFGTVPNGSTERNIRNNYPYMHQYMTKFNQKGVEDALVSLKTGKLDAFIYDAAVLNYKAGRDEGCKLVTIGSGYIFATTGYGIALQKGSPWKRQIDLALLQFVGDGEMEELETLWLTGICHNEKNEVMSSQLDIDNMAGVFYMLAAAMALSLITFIWEHLFYWKLRFCFTGVCSDRPGLLFSISRGIYSCIHGVHIEEKKKSPDFNLTGSQSNMLKLLRSAKNISSMSNMNSSRMDSPKRAADFIQRGSLIMDMVSDKGNLMYSDNRSFQGKESIFGDNMNELQTFVANRQKDNLNNYVFQGQHPLTLNESNPNTVEVAVSTESKANSRPRQLWKKSVDSIRQDSLSQNPVSQRDEATAENRTHSLKSPRYLPEEMAHSDISETSNRATCHREPDNSKNHKTKDNFKRSVASKYPKDCSEVERTYLKTKSSSPRDKIYTIDGEKEPGFHLDPPQFVENVTLPENVDFPDPYQDPSENFRKGDSTLPMNRNPLHNEEGLSNNDQYKLYSKHFTLKDKGSPHSETSERYRQNSTHCRSCLSNMPTYSGHFTMRSPFKCDACLRMGNLYDIDEDQMLQETGNPATGEQVYQQDWAQNNALQLQKNKLRISRQHSYDNIVDKPRELDLSRPSRSISLKDRERLLEGNFYGSLFSVPSSKLSGKKSSLFPQGLEDSKRSKSLLPDHTSDNPFLHSHRDDQRLVIGRCPSDPYKHSLPSQAVNDSYLRSSLRSTASYCSRDSRGHNDVYISEHVMPYAANKNNMYSTPRVLNSCSNRRVYKKMPSIESDV</sequence>